<protein>
    <recommendedName>
        <fullName>Phosphatidylinositol 4,5-bisphosphate 3-kinase catalytic subunit alpha isoform</fullName>
        <shortName>PI3-kinase subunit alpha</shortName>
        <shortName>PI3K-alpha</shortName>
        <shortName evidence="39">PI3Kalpha</shortName>
        <shortName>PtdIns-3-kinase subunit alpha</shortName>
        <ecNumber evidence="31">2.7.1.137</ecNumber>
        <ecNumber evidence="8 33">2.7.1.153</ecNumber>
    </recommendedName>
    <alternativeName>
        <fullName>Phosphatidylinositol 4,5-bisphosphate 3-kinase 110 kDa catalytic subunit alpha</fullName>
        <shortName>PtdIns-3-kinase subunit p110-alpha</shortName>
        <shortName evidence="38">p110alpha</shortName>
    </alternativeName>
    <alternativeName>
        <fullName evidence="39">Phosphoinositide 3-kinase alpha</fullName>
    </alternativeName>
    <alternativeName>
        <fullName>Phosphoinositide-3-kinase catalytic alpha polypeptide</fullName>
    </alternativeName>
    <alternativeName>
        <fullName>Serine/threonine protein kinase PIK3CA</fullName>
        <ecNumber evidence="31 33">2.7.11.1</ecNumber>
    </alternativeName>
</protein>
<reference key="1">
    <citation type="journal article" date="1994" name="Genomics">
        <title>Molecular cloning, cDNA sequence, and chromosomal localization of the human phosphatidylinositol 3-kinase p110 alpha (PIK3CA) gene.</title>
        <authorList>
            <person name="Volinia S."/>
            <person name="Hiles I."/>
            <person name="Ormondroyd E."/>
            <person name="Nizetic D."/>
            <person name="Antonacci R."/>
            <person name="Rocchi M."/>
            <person name="Waterfield M."/>
        </authorList>
    </citation>
    <scope>NUCLEOTIDE SEQUENCE [MRNA]</scope>
    <scope>VARIANTS VAL-43 AND ARG-332</scope>
</reference>
<reference key="2">
    <citation type="journal article" date="1997" name="Bioorg. Med. Chem.">
        <title>Cloning and mutagenesis of the p110 alpha subunit of human phosphoinositide 3'-hydroxykinase.</title>
        <authorList>
            <person name="Stirdivant S.M."/>
            <person name="Ahern J."/>
            <person name="Conroy R.R."/>
            <person name="Barnett S.F."/>
            <person name="Ledder L.M."/>
            <person name="Oliff A."/>
            <person name="Heimbrook D.C."/>
        </authorList>
    </citation>
    <scope>NUCLEOTIDE SEQUENCE [MRNA]</scope>
</reference>
<reference key="3">
    <citation type="journal article" date="2004" name="Genome Res.">
        <title>The status, quality, and expansion of the NIH full-length cDNA project: the Mammalian Gene Collection (MGC).</title>
        <authorList>
            <consortium name="The MGC Project Team"/>
        </authorList>
    </citation>
    <scope>NUCLEOTIDE SEQUENCE [LARGE SCALE MRNA]</scope>
    <source>
        <tissue>Lung</tissue>
    </source>
</reference>
<reference key="4">
    <citation type="journal article" date="1999" name="Oncogene">
        <title>Identification of a chromosome 3p14.3-21.1 gene, APPL, encoding an adaptor molecule that interacts with the oncoprotein-serine/threonine kinase AKT2.</title>
        <authorList>
            <person name="Mitsuuchi Y."/>
            <person name="Johnson S.W."/>
            <person name="Sonoda G."/>
            <person name="Tanno S."/>
            <person name="Golemis E.A."/>
            <person name="Testa J.R."/>
        </authorList>
    </citation>
    <scope>INTERACTION WITH APPL1</scope>
</reference>
<reference key="5">
    <citation type="journal article" date="2004" name="Protein Expr. Purif.">
        <title>Cloning, expression, purification, and characterization of the human Class Ia phosphoinositide 3-kinase isoforms.</title>
        <authorList>
            <person name="Meier T.I."/>
            <person name="Cook J.A."/>
            <person name="Thomas J.E."/>
            <person name="Radding J.A."/>
            <person name="Horn C."/>
            <person name="Lingaraj T."/>
            <person name="Smith M.C."/>
        </authorList>
    </citation>
    <scope>FUNCTION</scope>
    <scope>CATALYTIC ACTIVITY</scope>
</reference>
<reference key="6">
    <citation type="journal article" date="2013" name="PLoS ONE">
        <title>Oncogenic mutations of p110alpha isoform of PI 3-kinase upregulate its protein kinase activity.</title>
        <authorList>
            <person name="Buchanan C.M."/>
            <person name="Dickson J.M."/>
            <person name="Lee W.J."/>
            <person name="Guthridge M.A."/>
            <person name="Kendall J.D."/>
            <person name="Shepherd P.R."/>
        </authorList>
    </citation>
    <scope>FUNCTION</scope>
    <scope>CATALYTIC ACTIVITY</scope>
</reference>
<reference key="7">
    <citation type="journal article" date="2017" name="J. Biol. Chem.">
        <title>Kinetic and structural analyses reveal residues in phosphoinositide 3-kinase alpha that are critical for catalysis and substrate recognition.</title>
        <authorList>
            <person name="Maheshwari S."/>
            <person name="Miller M.S."/>
            <person name="O'Meally R."/>
            <person name="Cole R.N."/>
            <person name="Amzel L.M."/>
            <person name="Gabelli S.B."/>
        </authorList>
    </citation>
    <scope>FUNCTION</scope>
    <scope>CATALYTIC ACTIVITY</scope>
    <scope>BIOPHYSICOCHEMICAL PROPERTIES</scope>
</reference>
<reference key="8">
    <citation type="journal article" date="2011" name="J. Cell Biol.">
        <title>Phosphoinositide 3-kinase signaling pathway mediated by p110{alpha} regulates invadopodia formation.</title>
        <authorList>
            <person name="Yamaguchi H."/>
            <person name="Yoshida S."/>
            <person name="Muroi E."/>
            <person name="Yoshida N."/>
            <person name="Kawamura M."/>
            <person name="Kouchi Z."/>
            <person name="Nakamura Y."/>
            <person name="Sakai R."/>
            <person name="Fukami K."/>
        </authorList>
    </citation>
    <scope>FUNCTION IN INVADOPODIA FORMATION</scope>
    <scope>CHARACTERIZATION OF VARIANTS LYS-545 AND ARG-1047</scope>
</reference>
<reference key="9">
    <citation type="journal article" date="2013" name="Hum. Mol. Genet.">
        <title>Somatic gain-of-function mutations in PIK3CA in patients with macrodactyly.</title>
        <authorList>
            <person name="Rios J.J."/>
            <person name="Paria N."/>
            <person name="Burns D.K."/>
            <person name="Israel B.A."/>
            <person name="Cornelia R."/>
            <person name="Wise C.A."/>
            <person name="Ezaki M."/>
        </authorList>
    </citation>
    <scope>INVOLVEMENT IN MADAC</scope>
    <scope>VARIANTS MADAC PRO-115; LYS-542; ARG-1047 AND LEU-1047</scope>
</reference>
<reference key="10">
    <citation type="journal article" date="2013" name="Oncotarget">
        <title>FAM83B-mediated activation of PI3K/AKT and MAPK signaling cooperates to promote epithelial cell transformation and resistance to targeted therapies.</title>
        <authorList>
            <person name="Cipriano R."/>
            <person name="Miskimen K.L."/>
            <person name="Bryson B.L."/>
            <person name="Foy C.R."/>
            <person name="Bartel C.A."/>
            <person name="Jackson M.W."/>
        </authorList>
    </citation>
    <scope>INTERACTION WITH FAM83B</scope>
</reference>
<reference key="11">
    <citation type="journal article" date="2008" name="Cell Cycle">
        <title>Insights into the oncogenic effects of PIK3CA mutations from the structure of p110alpha/p85alpha.</title>
        <authorList>
            <person name="Huang C.-H."/>
            <person name="Mandelker D."/>
            <person name="Gabelli S.B."/>
            <person name="Amzel L.M."/>
        </authorList>
    </citation>
    <scope>REVIEW ON CANCER</scope>
</reference>
<reference key="12">
    <citation type="journal article" date="2008" name="Oncogene">
        <title>Class I PI3K in oncogenic cellular transformation.</title>
        <authorList>
            <person name="Zhao L."/>
            <person name="Vogt P.K."/>
        </authorList>
    </citation>
    <scope>REVIEW ON FUNCTION</scope>
    <scope>REVIEW ON CANCER</scope>
</reference>
<reference key="13">
    <citation type="journal article" date="2009" name="Curr. Opin. Cell Biol.">
        <title>Should individual PI3 kinase isoforms be targeted in cancer?</title>
        <authorList>
            <person name="Jia S."/>
            <person name="Roberts T.M."/>
            <person name="Zhao J.J."/>
        </authorList>
    </citation>
    <scope>REVIEW ON FUNCTION</scope>
</reference>
<reference key="14">
    <citation type="journal article" date="2018" name="Genet. Med.">
        <title>CLAPO syndrome: identification of somatic activating PIK3CA mutations and delineation of the natural history and phenotype.</title>
        <authorList>
            <person name="Rodriguez-Laguna L."/>
            <person name="Ibanez K."/>
            <person name="Gordo G."/>
            <person name="Garcia-Minaur S."/>
            <person name="Santos-Simarro F."/>
            <person name="Agra N."/>
            <person name="Vallespin E."/>
            <person name="Fernandez-Montano V.E."/>
            <person name="Martin-Arenas R."/>
            <person name="Del Pozo A."/>
            <person name="Gonzalez-Pecellin H."/>
            <person name="Mena R."/>
            <person name="Rueda-Arenas I."/>
            <person name="Gomez M.V."/>
            <person name="Villaverde C."/>
            <person name="Bustamante A."/>
            <person name="Ayuso C."/>
            <person name="Ruiz-Perez V.L."/>
            <person name="Nevado J."/>
            <person name="Lapunzina P."/>
            <person name="Lopez-Gutierrez J.C."/>
            <person name="Martinez-Glez V."/>
        </authorList>
    </citation>
    <scope>INVOLVEMENT IN CLAPO</scope>
    <scope>VARIANTS CLAPO SER-83; PRO-115; ARG-420; LYS-542 AND LEU-1047</scope>
</reference>
<reference key="15">
    <citation type="journal article" date="2021" name="N. Engl. J. Med.">
        <title>Somatic PIK3CA mutations in sporadic cerebral cavernous malformations.</title>
        <authorList>
            <person name="Peyre M."/>
            <person name="Miyagishima D."/>
            <person name="Bielle F."/>
            <person name="Chapon F."/>
            <person name="Sierant M."/>
            <person name="Venot Q."/>
            <person name="Lerond J."/>
            <person name="Marijon P."/>
            <person name="Abi-Jaoude S."/>
            <person name="Le Van T."/>
            <person name="Labreche K."/>
            <person name="Houlston R."/>
            <person name="Faisant M."/>
            <person name="Clemenceau S."/>
            <person name="Boch A.L."/>
            <person name="Nouet A."/>
            <person name="Carpentier A."/>
            <person name="Boetto J."/>
            <person name="Louvi A."/>
            <person name="Kalamarides M."/>
        </authorList>
    </citation>
    <scope>INVOLVEMENT IN CCM4</scope>
    <scope>VARIANTS CCM4 LYS-542; ARG-1047 AND LEU-1047</scope>
</reference>
<reference key="16">
    <citation type="journal article" date="2023" name="J. Exp. Med.">
        <title>Hemifacial myohyperplasia is due to somatic muscular PIK3CA gain-of-function mutations and responds to pharmacological inhibition.</title>
        <authorList>
            <person name="Bayard C."/>
            <person name="Segna E."/>
            <person name="Taverne M."/>
            <person name="Fraissenon A."/>
            <person name="Hennocq Q."/>
            <person name="Periou B."/>
            <person name="Zerbib L."/>
            <person name="Ladraa S."/>
            <person name="Chapelle C."/>
            <person name="Hoguin C."/>
            <person name="Kaltenbach S."/>
            <person name="Villarese P."/>
            <person name="Asnafi V."/>
            <person name="Broissand C."/>
            <person name="Nemazanyy I."/>
            <person name="Autret G."/>
            <person name="Goudin N."/>
            <person name="Legendre C."/>
            <person name="Authier F.J."/>
            <person name="Viel T."/>
            <person name="Tavitian B."/>
            <person name="Gitiaux C."/>
            <person name="Fraitag S."/>
            <person name="Duong J.P."/>
            <person name="Delcros C."/>
            <person name="Sergent B."/>
            <person name="Picard A."/>
            <person name="Dussiot M."/>
            <person name="Guibaud L."/>
            <person name="Khonsari R."/>
            <person name="Canaud G."/>
        </authorList>
    </citation>
    <scope>INVOLVEMENT IN HFMH</scope>
    <scope>VARIANTS HFMH LYS-542; LYS-545 AND ARG-1047</scope>
    <scope>CHARACTERIZATION OF VARIANTS HFMH LYS-542; LYS-545 AND ARG-1047</scope>
</reference>
<reference key="17">
    <citation type="journal article" date="2007" name="Science">
        <title>The structure of a human p110alpha/p85alpha complex elucidates the effects of oncogenic PI3Kalpha mutations.</title>
        <authorList>
            <person name="Huang C.-H."/>
            <person name="Mandelker D."/>
            <person name="Schmidt-Kittler O."/>
            <person name="Samuels Y."/>
            <person name="Velculescu V.E."/>
            <person name="Kinzler K.W."/>
            <person name="Vogelstein B."/>
            <person name="Gabelli S.B."/>
            <person name="Amzel L.M."/>
        </authorList>
    </citation>
    <scope>X-RAY CRYSTALLOGRAPHY (3 ANGSTROMS) IN A COMPLEX WITH PIK3R1</scope>
    <scope>DOMAINS</scope>
</reference>
<reference key="18">
    <citation type="submission" date="2008-04" db="PDB data bank">
        <title>Solution structure of the C2 domain from human PI3-kinase p110 subunit alpha.</title>
        <authorList>
            <consortium name="RIKEN structural genomics initiative (RSGI)"/>
        </authorList>
    </citation>
    <scope>STRUCTURE BY NMR OF 331-481</scope>
</reference>
<reference key="19">
    <citation type="journal article" date="2009" name="Proc. Natl. Acad. Sci. U.S.A.">
        <title>A frequent kinase domain mutation that changes the interaction between PI3Kalpha and the membrane.</title>
        <authorList>
            <person name="Mandelker D."/>
            <person name="Gabelli S.B."/>
            <person name="Schmidt-Kittler O."/>
            <person name="Zhu J."/>
            <person name="Cheong I."/>
            <person name="Huang C.H."/>
            <person name="Kinzler K.W."/>
            <person name="Vogelstein B."/>
            <person name="Amzel L.M."/>
        </authorList>
    </citation>
    <scope>X-RAY CRYSTALLOGRAPHY (2.8 ANGSTROMS) OF MUTANT HIS-1047 IN COMPLEX WITH WORTMANNIN AND PIK3R1</scope>
    <scope>INTERACTION WITH PIK3R1</scope>
    <scope>CHARACTERIZATION OF VARIANT ARG-1047</scope>
    <scope>DOMAINS</scope>
</reference>
<reference key="20">
    <citation type="journal article" date="2004" name="Cancer Res.">
        <title>Mutations of PIK3CA in anaplastic oligodendrogliomas, high-grade astrocytomas, and medulloblastomas.</title>
        <authorList>
            <person name="Broderick D.K."/>
            <person name="Di C."/>
            <person name="Parrett T.J."/>
            <person name="Samuels Y.R."/>
            <person name="Cummins J.M."/>
            <person name="McLendon R.E."/>
            <person name="Fults D.W."/>
            <person name="Velculescu V.E."/>
            <person name="Bigner D.D."/>
            <person name="Yan H."/>
        </authorList>
    </citation>
    <scope>VARIANTS CANCER LYS-542; LYS-545; PRO-546; ASN-1021; ARG-1047; LEU-1047 AND TYR-1065</scope>
</reference>
<reference key="21">
    <citation type="journal article" date="2004" name="Cancer Res.">
        <title>Mutation of the PIK3CA gene in ovarian and breast cancer.</title>
        <authorList>
            <person name="Campbell I.G."/>
            <person name="Russell S.E."/>
            <person name="Choong D.Y.H."/>
            <person name="Montgomery K.G."/>
            <person name="Ciavarella M.L."/>
            <person name="Hooi C.S.F."/>
            <person name="Cristiano B.E."/>
            <person name="Pearson R.B."/>
            <person name="Phillips W.A."/>
        </authorList>
    </citation>
    <scope>INVOLVEMENT IN OC</scope>
    <scope>VARIANTS CANCER GLY-545; LYS-545; LYS-546; GLU-546; ARG-1047 AND LEU-1047</scope>
</reference>
<reference key="22">
    <citation type="journal article" date="2004" name="Science">
        <title>High frequency of mutations of the PIK3CA gene in human cancers.</title>
        <authorList>
            <person name="Samuels Y."/>
            <person name="Wang Z."/>
            <person name="Bardelli A."/>
            <person name="Silliman N."/>
            <person name="Ptak J."/>
            <person name="Szabo S."/>
            <person name="Yan H."/>
            <person name="Gazdar A."/>
            <person name="Powell S.M."/>
            <person name="Riggins G.J."/>
            <person name="Willson J.K.V."/>
            <person name="Markowitz S."/>
            <person name="Kinzler K.W."/>
            <person name="Vogelstein B."/>
            <person name="Velculescu V.E."/>
        </authorList>
    </citation>
    <scope>VARIANT CANCER ARG-1047</scope>
</reference>
<reference key="23">
    <citation type="journal article" date="2005" name="Acta Neuropathol.">
        <title>PIK3CA mutations in glioblastoma multiforme.</title>
        <authorList>
            <person name="Hartmann C."/>
            <person name="Bartels G."/>
            <person name="Gehlhaar C."/>
            <person name="Holtkamp N."/>
            <person name="von Deimling A."/>
        </authorList>
    </citation>
    <scope>VARIANTS CANCER GLN-88; LYS-542; ALA-545 AND ASN-1025</scope>
</reference>
<reference key="24">
    <citation type="journal article" date="2005" name="BMC Cancer">
        <title>Mutations of PIK3CA in gastric adenocarcinoma.</title>
        <authorList>
            <person name="Li V.S.W."/>
            <person name="Wong C.W."/>
            <person name="Chan T.L."/>
            <person name="Chan A.S.W."/>
            <person name="Zhao W."/>
            <person name="Chu K.-M."/>
            <person name="So S."/>
            <person name="Chen X."/>
            <person name="Yuen S.T."/>
            <person name="Leung S.Y."/>
        </authorList>
    </citation>
    <scope>VARIANTS CANCER LYS-542; LYS-545 AND ARG-1047</scope>
</reference>
<reference key="25">
    <citation type="journal article" date="2005" name="Cancer Res.">
        <title>Functional analysis of PIK3CA gene mutations in human colorectal cancer.</title>
        <authorList>
            <person name="Ikenoue T."/>
            <person name="Kanai F."/>
            <person name="Hikiba Y."/>
            <person name="Obata T."/>
            <person name="Tanaka Y."/>
            <person name="Imamura J."/>
            <person name="Ohta M."/>
            <person name="Jazag A."/>
            <person name="Guleng B."/>
            <person name="Tateishi K."/>
            <person name="Asaoka Y."/>
            <person name="Matsumura M."/>
            <person name="Kawabe T."/>
            <person name="Omata M."/>
        </authorList>
    </citation>
    <scope>INVOLVEMENT IN CRC</scope>
    <scope>CHARACTERIZATION OF VARIANTS CRC HIS-38; VAL-106; ARG-420; GLN-453; LYS-542; LYS-545; ILE-1043 AND ARG-1047</scope>
</reference>
<reference key="26">
    <citation type="journal article" date="2005" name="Cancer Res.">
        <title>High frequency of coexistent mutations of PIK3CA and PTEN genes in endometrial carcinoma.</title>
        <authorList>
            <person name="Oda K."/>
            <person name="Stokoe D."/>
            <person name="Taketani Y."/>
            <person name="McCormick F."/>
        </authorList>
    </citation>
    <scope>VARIANTS CANCER GLN-542; LYS-542; GLY-545; LYS-545; ARG-1007; HIS-1021; CYS-1021; VAL-1035; ILE-1043; TYR-1047; ARG-1047; ASP-1050; LYS-1052 AND LEU-1065</scope>
</reference>
<reference key="27">
    <citation type="journal article" date="2005" name="Eur. J. Cancer">
        <title>The prevalence of PIK3CA mutations in gastric and colon cancer.</title>
        <authorList>
            <person name="Velho S."/>
            <person name="Oliveira C."/>
            <person name="Ferreira A."/>
            <person name="Ferreira A.C."/>
            <person name="Suriano G."/>
            <person name="Schwartz S. Jr."/>
            <person name="Duval A."/>
            <person name="Carneiro F."/>
            <person name="Machado J.C."/>
            <person name="Hamelin R."/>
            <person name="Seruca R."/>
        </authorList>
    </citation>
    <scope>INVOLVEMENT IN CRC</scope>
    <scope>VARIANTS CANCER LYS-542; GLY-545; LYS-545; GLN-1023; ARG-1047 AND LEU-1047</scope>
</reference>
<reference key="28">
    <citation type="journal article" date="2005" name="Hum. Mutat.">
        <title>PIK3CA mutations in advanced ovarian carcinomas.</title>
        <authorList>
            <person name="Wang Y."/>
            <person name="Helland A."/>
            <person name="Holm R."/>
            <person name="Kristensen G.B."/>
            <person name="Boerresen-Dale A.-L."/>
        </authorList>
    </citation>
    <scope>VARIANTS CANCER LYS-545 AND ARG-1047</scope>
</reference>
<reference key="29">
    <citation type="journal article" date="2005" name="Oncogene">
        <title>PIK3CA gene is frequently mutated in breast carcinomas and hepatocellular carcinomas.</title>
        <authorList>
            <person name="Lee J.W."/>
            <person name="Soung Y.H."/>
            <person name="Kim S.Y."/>
            <person name="Lee H.W."/>
            <person name="Park W.S."/>
            <person name="Nam S.W."/>
            <person name="Kim S.H."/>
            <person name="Lee J.Y."/>
            <person name="Yoo N.J."/>
            <person name="Lee S.H."/>
        </authorList>
    </citation>
    <scope>VARIANT HCC ALA-545</scope>
</reference>
<reference key="30">
    <citation type="journal article" date="2006" name="Clin. Cancer Res.">
        <title>PIK3CA mutations in head and neck squamous cell carcinoma.</title>
        <authorList>
            <person name="Qiu W."/>
            <person name="Schoenleben F."/>
            <person name="Li X."/>
            <person name="Ho D.J."/>
            <person name="Close L.G."/>
            <person name="Manolidis S."/>
            <person name="Bennett B.P."/>
            <person name="Su G.H."/>
        </authorList>
    </citation>
    <scope>VARIANTS CANCER CYS-343; LYS-542; LYS-545 AND ARG-1047</scope>
    <scope>VARIANT MET-391</scope>
</reference>
<reference key="31">
    <citation type="journal article" date="2006" name="Int. J. Cancer">
        <title>PIK3CA mutations in nasopharyngeal carcinoma.</title>
        <authorList>
            <person name="Or Y.Y.-Y."/>
            <person name="Hui A.B.-Y."/>
            <person name="To K.-F."/>
            <person name="Lam C.N.-Y."/>
            <person name="Lo K.-W."/>
        </authorList>
    </citation>
    <scope>VARIANT CANCER ARG-1047</scope>
</reference>
<reference key="32">
    <citation type="journal article" date="2006" name="J. Pathol.">
        <title>PIK3CA mutation and histological type in breast carcinoma: high frequency of mutations in lobular carcinoma.</title>
        <authorList>
            <person name="Buttitta F."/>
            <person name="Felicioni L."/>
            <person name="Barassi F."/>
            <person name="Martella C."/>
            <person name="Paolizzi D."/>
            <person name="Fresu G."/>
            <person name="Salvatore S."/>
            <person name="Cuccurullo F."/>
            <person name="Mezzetti A."/>
            <person name="Campani D."/>
            <person name="Marchetti A."/>
        </authorList>
    </citation>
    <scope>VARIANTS BC LYS-542; VAL-542; LYS-545; ARG-546; ARG-1047 AND LEU-1047</scope>
</reference>
<reference key="33">
    <citation type="journal article" date="2006" name="Proc. Natl. Acad. Sci. U.S.A.">
        <title>Cancer-specific mutations in PIK3CA are oncogenic in vivo.</title>
        <authorList>
            <person name="Bader A.G."/>
            <person name="Kang S."/>
            <person name="Vogt P.K."/>
        </authorList>
    </citation>
    <scope>CHARACTERIZATION OF VARIANTS CANCER LYS-542; LYS-545 AND ARG-1047</scope>
</reference>
<reference key="34">
    <citation type="journal article" date="2007" name="Proc. Natl. Acad. Sci. U.S.A.">
        <title>Oncogenic PIK3CA mutations occur in epidermal nevi and seborrheic keratoses with a characteristic mutation pattern.</title>
        <authorList>
            <person name="Hafner C."/>
            <person name="Lopez-Knowles E."/>
            <person name="Luis N.M."/>
            <person name="Toll A."/>
            <person name="Baselga E."/>
            <person name="Fernandez-Casado A."/>
            <person name="Hernandez S."/>
            <person name="Ribe A."/>
            <person name="Mentzel T."/>
            <person name="Stoehr R."/>
            <person name="Hofstaedter F."/>
            <person name="Landthaler M."/>
            <person name="Vogt T."/>
            <person name="Pujol R.M."/>
            <person name="Hartmann A."/>
            <person name="Real F.X."/>
        </authorList>
    </citation>
    <scope>VARIANTS KERSEB LYS-542; LYS-545; GLY-545 AND ARG-1047</scope>
</reference>
<reference key="35">
    <citation type="journal article" date="2012" name="Am. J. Hum. Genet.">
        <title>Somatic mosaic activating mutations in PIK3CA cause CLOVES syndrome.</title>
        <authorList>
            <person name="Kurek K.C."/>
            <person name="Luks V.L."/>
            <person name="Ayturk U.M."/>
            <person name="Alomari A.I."/>
            <person name="Fishman S.J."/>
            <person name="Spencer S.A."/>
            <person name="Mulliken J.B."/>
            <person name="Bowen M.E."/>
            <person name="Yamamoto G.L."/>
            <person name="Kozakewich H.P."/>
            <person name="Warman M.L."/>
        </authorList>
    </citation>
    <scope>VARIANTS CLOVE ARG-420; LYS-542 AND ARG-1047</scope>
</reference>
<reference key="36">
    <citation type="journal article" date="2012" name="Nat. Genet.">
        <title>De novo germline and postzygotic mutations in AKT3, PIK3R2 and PIK3CA cause a spectrum of related megalencephaly syndromes.</title>
        <authorList>
            <person name="Riviere J.B."/>
            <person name="Mirzaa G.M."/>
            <person name="O'Roak B.J."/>
            <person name="Beddaoui M."/>
            <person name="Alcantara D."/>
            <person name="Conway R.L."/>
            <person name="St-Onge J."/>
            <person name="Schwartzentruber J.A."/>
            <person name="Gripp K.W."/>
            <person name="Nikkel S.M."/>
            <person name="Worthylake T."/>
            <person name="Sullivan C.T."/>
            <person name="Ward T.R."/>
            <person name="Butler H.E."/>
            <person name="Kramer N.A."/>
            <person name="Albrecht B."/>
            <person name="Armour C.M."/>
            <person name="Armstrong L."/>
            <person name="Caluseriu O."/>
            <person name="Cytrynbaum C."/>
            <person name="Drolet B.A."/>
            <person name="Innes A.M."/>
            <person name="Lauzon J.L."/>
            <person name="Lin A.E."/>
            <person name="Mancini G.M."/>
            <person name="Meschino W.S."/>
            <person name="Reggin J.D."/>
            <person name="Saggar A.K."/>
            <person name="Lerman-Sagie T."/>
            <person name="Uyanik G."/>
            <person name="Weksberg R."/>
            <person name="Zirn B."/>
            <person name="Beaulieu C.L."/>
            <person name="Majewski J."/>
            <person name="Bulman D.E."/>
            <person name="O'Driscoll M."/>
            <person name="Shendure J."/>
            <person name="Graham J.M. Jr."/>
            <person name="Boycott K.M."/>
            <person name="Dobyns W.B."/>
        </authorList>
    </citation>
    <scope>VARIANTS MCAP LYS-81; GLN-88; ARG-364; LYS-365; TYR-378; GLU-453 DEL; LYS-545; LYS-726; ARG-914; CYS-1021; ALA-1025; VAL-1035; ILE-1043; TYR-1047 AND SER-1049</scope>
</reference>
<reference key="37">
    <citation type="journal article" date="2013" name="Am. J. Hum. Genet.">
        <title>Germline PIK3CA and AKT1 mutations in Cowden and Cowden-like syndromes.</title>
        <authorList>
            <person name="Orloff M.S."/>
            <person name="He X."/>
            <person name="Peterson C."/>
            <person name="Chen F."/>
            <person name="Chen J.L."/>
            <person name="Mester J.L."/>
            <person name="Eng C."/>
        </authorList>
    </citation>
    <scope>VARIANTS CWS5 ASP-118; LYS-135; LYS-218; ILE-356; LYS-382 AND ALA-545</scope>
</reference>
<reference key="38">
    <citation type="journal article" date="2016" name="Hum. Mutat.">
        <title>Identification and characterisation of a novel constitutional PIK3CA mutation in a child lacking the typical segmental overgrowth of 'PIK3CA-related overgrowth spectrum' (PROS).</title>
        <authorList>
            <person name="Donato N.D."/>
            <person name="Rump A."/>
            <person name="Mirzaa G.M."/>
            <person name="Alcantara D."/>
            <person name="Oliver A."/>
            <person name="Schrock E."/>
            <person name="Dobyns W.B."/>
            <person name="O'Driscoll M."/>
        </authorList>
    </citation>
    <scope>VARIANT MCAP ASN-112</scope>
    <scope>CHARACTERIZATION OF VARIANT MCAP ASN-112</scope>
    <scope>FUNCTION</scope>
    <scope>SUBUNIT</scope>
</reference>
<proteinExistence type="evidence at protein level"/>
<name>PK3CA_HUMAN</name>
<evidence type="ECO:0000250" key="1">
    <source>
        <dbReference type="UniProtKB" id="P42337"/>
    </source>
</evidence>
<evidence type="ECO:0000255" key="2">
    <source>
        <dbReference type="PROSITE-ProRule" id="PRU00269"/>
    </source>
</evidence>
<evidence type="ECO:0000255" key="3">
    <source>
        <dbReference type="PROSITE-ProRule" id="PRU00877"/>
    </source>
</evidence>
<evidence type="ECO:0000255" key="4">
    <source>
        <dbReference type="PROSITE-ProRule" id="PRU00878"/>
    </source>
</evidence>
<evidence type="ECO:0000255" key="5">
    <source>
        <dbReference type="PROSITE-ProRule" id="PRU00879"/>
    </source>
</evidence>
<evidence type="ECO:0000255" key="6">
    <source>
        <dbReference type="PROSITE-ProRule" id="PRU00880"/>
    </source>
</evidence>
<evidence type="ECO:0000269" key="7">
    <source>
    </source>
</evidence>
<evidence type="ECO:0000269" key="8">
    <source>
    </source>
</evidence>
<evidence type="ECO:0000269" key="9">
    <source>
    </source>
</evidence>
<evidence type="ECO:0000269" key="10">
    <source>
    </source>
</evidence>
<evidence type="ECO:0000269" key="11">
    <source>
    </source>
</evidence>
<evidence type="ECO:0000269" key="12">
    <source>
    </source>
</evidence>
<evidence type="ECO:0000269" key="13">
    <source>
    </source>
</evidence>
<evidence type="ECO:0000269" key="14">
    <source>
    </source>
</evidence>
<evidence type="ECO:0000269" key="15">
    <source>
    </source>
</evidence>
<evidence type="ECO:0000269" key="16">
    <source>
    </source>
</evidence>
<evidence type="ECO:0000269" key="17">
    <source>
    </source>
</evidence>
<evidence type="ECO:0000269" key="18">
    <source>
    </source>
</evidence>
<evidence type="ECO:0000269" key="19">
    <source>
    </source>
</evidence>
<evidence type="ECO:0000269" key="20">
    <source>
    </source>
</evidence>
<evidence type="ECO:0000269" key="21">
    <source>
    </source>
</evidence>
<evidence type="ECO:0000269" key="22">
    <source>
    </source>
</evidence>
<evidence type="ECO:0000269" key="23">
    <source>
    </source>
</evidence>
<evidence type="ECO:0000269" key="24">
    <source>
    </source>
</evidence>
<evidence type="ECO:0000269" key="25">
    <source>
    </source>
</evidence>
<evidence type="ECO:0000269" key="26">
    <source>
    </source>
</evidence>
<evidence type="ECO:0000269" key="27">
    <source>
    </source>
</evidence>
<evidence type="ECO:0000269" key="28">
    <source>
    </source>
</evidence>
<evidence type="ECO:0000269" key="29">
    <source>
    </source>
</evidence>
<evidence type="ECO:0000269" key="30">
    <source>
    </source>
</evidence>
<evidence type="ECO:0000269" key="31">
    <source>
    </source>
</evidence>
<evidence type="ECO:0000269" key="32">
    <source>
    </source>
</evidence>
<evidence type="ECO:0000269" key="33">
    <source>
    </source>
</evidence>
<evidence type="ECO:0000269" key="34">
    <source>
    </source>
</evidence>
<evidence type="ECO:0000269" key="35">
    <source>
    </source>
</evidence>
<evidence type="ECO:0000269" key="36">
    <source>
    </source>
</evidence>
<evidence type="ECO:0000269" key="37">
    <source>
    </source>
</evidence>
<evidence type="ECO:0000303" key="38">
    <source>
    </source>
</evidence>
<evidence type="ECO:0000303" key="39">
    <source>
    </source>
</evidence>
<evidence type="ECO:0000305" key="40"/>
<evidence type="ECO:0000305" key="41">
    <source>
    </source>
</evidence>
<evidence type="ECO:0000305" key="42">
    <source>
    </source>
</evidence>
<evidence type="ECO:0000305" key="43">
    <source>
    </source>
</evidence>
<evidence type="ECO:0000305" key="44">
    <source>
    </source>
</evidence>
<evidence type="ECO:0007829" key="45">
    <source>
        <dbReference type="PDB" id="3HHM"/>
    </source>
</evidence>
<evidence type="ECO:0007829" key="46">
    <source>
        <dbReference type="PDB" id="4JPS"/>
    </source>
</evidence>
<evidence type="ECO:0007829" key="47">
    <source>
        <dbReference type="PDB" id="4OVU"/>
    </source>
</evidence>
<evidence type="ECO:0007829" key="48">
    <source>
        <dbReference type="PDB" id="4TUU"/>
    </source>
</evidence>
<evidence type="ECO:0007829" key="49">
    <source>
        <dbReference type="PDB" id="5SW8"/>
    </source>
</evidence>
<evidence type="ECO:0007829" key="50">
    <source>
        <dbReference type="PDB" id="5SXA"/>
    </source>
</evidence>
<evidence type="ECO:0007829" key="51">
    <source>
        <dbReference type="PDB" id="6GVF"/>
    </source>
</evidence>
<evidence type="ECO:0007829" key="52">
    <source>
        <dbReference type="PDB" id="6PYS"/>
    </source>
</evidence>
<evidence type="ECO:0007829" key="53">
    <source>
        <dbReference type="PDB" id="7JIU"/>
    </source>
</evidence>
<evidence type="ECO:0007829" key="54">
    <source>
        <dbReference type="PDB" id="7K6M"/>
    </source>
</evidence>
<evidence type="ECO:0007829" key="55">
    <source>
        <dbReference type="PDB" id="7K6N"/>
    </source>
</evidence>
<evidence type="ECO:0007829" key="56">
    <source>
        <dbReference type="PDB" id="7MYN"/>
    </source>
</evidence>
<evidence type="ECO:0007829" key="57">
    <source>
        <dbReference type="PDB" id="7PG5"/>
    </source>
</evidence>
<evidence type="ECO:0007829" key="58">
    <source>
        <dbReference type="PDB" id="8BFU"/>
    </source>
</evidence>
<evidence type="ECO:0007829" key="59">
    <source>
        <dbReference type="PDB" id="8DCP"/>
    </source>
</evidence>
<evidence type="ECO:0007829" key="60">
    <source>
        <dbReference type="PDB" id="8DCX"/>
    </source>
</evidence>
<evidence type="ECO:0007829" key="61">
    <source>
        <dbReference type="PDB" id="8EXL"/>
    </source>
</evidence>
<evidence type="ECO:0007829" key="62">
    <source>
        <dbReference type="PDB" id="8EXV"/>
    </source>
</evidence>
<evidence type="ECO:0007829" key="63">
    <source>
        <dbReference type="PDB" id="8GUA"/>
    </source>
</evidence>
<evidence type="ECO:0007829" key="64">
    <source>
        <dbReference type="PDB" id="8GUD"/>
    </source>
</evidence>
<evidence type="ECO:0007829" key="65">
    <source>
        <dbReference type="PDB" id="8SBC"/>
    </source>
</evidence>
<evidence type="ECO:0007829" key="66">
    <source>
        <dbReference type="PDB" id="8TSA"/>
    </source>
</evidence>
<evidence type="ECO:0007829" key="67">
    <source>
        <dbReference type="PDB" id="8V8V"/>
    </source>
</evidence>
<evidence type="ECO:0007829" key="68">
    <source>
        <dbReference type="PDB" id="8W9A"/>
    </source>
</evidence>
<evidence type="ECO:0007829" key="69">
    <source>
        <dbReference type="PDB" id="8W9B"/>
    </source>
</evidence>
<sequence length="1068" mass="124284">MPPRPSSGELWGIHLMPPRILVECLLPNGMIVTLECLREATLITIKHELFKEARKYPLHQLLQDESSYIFVSVTQEAEREEFFDETRRLCDLRLFQPFLKVIEPVGNREEKILNREIGFAIGMPVCEFDMVKDPEVQDFRRNILNVCKEAVDLRDLNSPHSRAMYVYPPNVESSPELPKHIYNKLDKGQIIVVIWVIVSPNNDKQKYTLKINHDCVPEQVIAEAIRKKTRSMLLSSEQLKLCVLEYQGKYILKVCGCDEYFLEKYPLSQYKYIRSCIMLGRMPNLMLMAKESLYSQLPMDCFTMPSYSRRISTATPYMNGETSTKSLWVINSALRIKILCATYVNVNIRDIDKIYVRTGIYHGGEPLCDNVNTQRVPCSNPRWNEWLNYDIYIPDLPRAARLCLSICSVKGRKGAKEEHCPLAWGNINLFDYTDTLVSGKMALNLWPVPHGLEDLLNPIGVTGSNPNKETPCLELEFDWFSSVVKFPDMSVIEEHANWSVSREAGFSYSHAGLSNRLARDNELRENDKEQLKAISTRDPLSEITEQEKDFLWSHRHYCVTIPEILPKLLLSVKWNSRDEVAQMYCLVKDWPPIKPEQAMELLDCNYPDPMVRGFAVRCLEKYLTDDKLSQYLIQLVQVLKYEQYLDNLLVRFLLKKALTNQRIGHFFFWHLKSEMHNKTVSQRFGLLLESYCRACGMYLKHLNRQVEAMEKLINLTDILKQEKKDETQKVQMKFLVEQMRRPDFMDALQGFLSPLNPAHQLGNLRLEECRIMSSAKRPLWLNWENPDIMSELLFQNNEIIFKNGDDLRQDMLTLQIIRIMENIWQNQGLDLRMLPYGCLSIGDCVGLIEVVRNSHTIMQIQCKGGLKGALQFNSHTLHQWLKDKNKGEIYDAAIDLFTRSCAGYCVATFILGIGDRHNSNIMVKDDGQLFHIDFGHFLDHKKKKFGYKRERVPFVLTQDFLIVISKGAQECTKTREFERFQEMCYKAYLAIRQHANLFINLFSMMLGSGMPELQSFDDIAYIRKTLALDKTEQEALEYFMKQMNDAHHGGWTTKMDWIFHTIKQHALN</sequence>
<comment type="function">
    <text evidence="1 8 25 31 32 33">Phosphoinositide-3-kinase (PI3K) phosphorylates phosphatidylinositol (PI) and its phosphorylated derivatives at position 3 of the inositol ring to produce 3-phosphoinositides (PubMed:15135396, PubMed:23936502, PubMed:28676499). Uses ATP and PtdIns(4,5)P2 (phosphatidylinositol 4,5-bisphosphate) to generate phosphatidylinositol 3,4,5-trisphosphate (PIP3) (PubMed:15135396, PubMed:28676499). PIP3 plays a key role by recruiting PH domain-containing proteins to the membrane, including AKT1 and PDPK1, activating signaling cascades involved in cell growth, survival, proliferation, motility and morphology. Participates in cellular signaling in response to various growth factors. Involved in the activation of AKT1 upon stimulation by receptor tyrosine kinases ligands such as EGF, insulin, IGF1, VEGFA and PDGF. Involved in signaling via insulin-receptor substrate (IRS) proteins. Essential in endothelial cell migration during vascular development through VEGFA signaling, possibly by regulating RhoA activity. Required for lymphatic vasculature development, possibly by binding to RAS and by activation by EGF and FGF2, but not by PDGF. Regulates invadopodia formation through the PDPK1-AKT1 pathway. Participates in cardiomyogenesis in embryonic stem cells through a AKT1 pathway. Participates in vasculogenesis in embryonic stem cells through PDK1 and protein kinase C pathway. In addition to its lipid kinase activity, it displays a serine-protein kinase activity that results in the autophosphorylation of the p85alpha regulatory subunit as well as phosphorylation of other proteins such as 4EBP1, H-Ras, the IL-3 beta c receptor and possibly others (PubMed:23936502, PubMed:28676499). Plays a role in the positive regulation of phagocytosis and pinocytosis (By similarity).</text>
</comment>
<comment type="catalytic activity">
    <reaction evidence="8 33">
        <text>a 1,2-diacyl-sn-glycero-3-phospho-(1D-myo-inositol-4,5-bisphosphate) + ATP = a 1,2-diacyl-sn-glycero-3-phospho-(1D-myo-inositol-3,4,5-trisphosphate) + ADP + H(+)</text>
        <dbReference type="Rhea" id="RHEA:21292"/>
        <dbReference type="ChEBI" id="CHEBI:15378"/>
        <dbReference type="ChEBI" id="CHEBI:30616"/>
        <dbReference type="ChEBI" id="CHEBI:57836"/>
        <dbReference type="ChEBI" id="CHEBI:58456"/>
        <dbReference type="ChEBI" id="CHEBI:456216"/>
        <dbReference type="EC" id="2.7.1.153"/>
    </reaction>
    <physiologicalReaction direction="left-to-right" evidence="41 44">
        <dbReference type="Rhea" id="RHEA:21293"/>
    </physiologicalReaction>
</comment>
<comment type="catalytic activity">
    <reaction evidence="31">
        <text>a 1,2-diacyl-sn-glycero-3-phospho-(1D-myo-inositol) + ATP = a 1,2-diacyl-sn-glycero-3-phospho-(1D-myo-inositol-3-phosphate) + ADP + H(+)</text>
        <dbReference type="Rhea" id="RHEA:12709"/>
        <dbReference type="ChEBI" id="CHEBI:15378"/>
        <dbReference type="ChEBI" id="CHEBI:30616"/>
        <dbReference type="ChEBI" id="CHEBI:57880"/>
        <dbReference type="ChEBI" id="CHEBI:58088"/>
        <dbReference type="ChEBI" id="CHEBI:456216"/>
        <dbReference type="EC" id="2.7.1.137"/>
    </reaction>
    <physiologicalReaction direction="left-to-right" evidence="43">
        <dbReference type="Rhea" id="RHEA:12710"/>
    </physiologicalReaction>
</comment>
<comment type="catalytic activity">
    <reaction evidence="31 33">
        <text>L-seryl-[protein] + ATP = O-phospho-L-seryl-[protein] + ADP + H(+)</text>
        <dbReference type="Rhea" id="RHEA:17989"/>
        <dbReference type="Rhea" id="RHEA-COMP:9863"/>
        <dbReference type="Rhea" id="RHEA-COMP:11604"/>
        <dbReference type="ChEBI" id="CHEBI:15378"/>
        <dbReference type="ChEBI" id="CHEBI:29999"/>
        <dbReference type="ChEBI" id="CHEBI:30616"/>
        <dbReference type="ChEBI" id="CHEBI:83421"/>
        <dbReference type="ChEBI" id="CHEBI:456216"/>
        <dbReference type="EC" id="2.7.11.1"/>
    </reaction>
    <physiologicalReaction direction="left-to-right" evidence="43 44">
        <dbReference type="Rhea" id="RHEA:17990"/>
    </physiologicalReaction>
</comment>
<comment type="catalytic activity">
    <reaction evidence="33">
        <text>1,2-dioctanoyl-sn-glycero-3-phospho-(1D-myo-inositol-4,5-bisphosphate) + ATP = 1,2-dioctanoyl-sn-glycero-3-phospho-(1D-myo-inositol-3,4,5-trisphosphate) + ADP + H(+)</text>
        <dbReference type="Rhea" id="RHEA:55632"/>
        <dbReference type="ChEBI" id="CHEBI:15378"/>
        <dbReference type="ChEBI" id="CHEBI:30616"/>
        <dbReference type="ChEBI" id="CHEBI:83416"/>
        <dbReference type="ChEBI" id="CHEBI:83419"/>
        <dbReference type="ChEBI" id="CHEBI:456216"/>
    </reaction>
    <physiologicalReaction direction="left-to-right" evidence="44">
        <dbReference type="Rhea" id="RHEA:55633"/>
    </physiologicalReaction>
</comment>
<comment type="catalytic activity">
    <reaction evidence="41">
        <text>1-octadecanoyl-2-(5Z,8Z,11Z,14Z)-eicosatetraenoyl-sn-glycero-3-phospho-1D-myo-inositol 4,5-bisphosphate + ATP = 1-octadecanoyl-2-(5Z,8Z,11Z,14Z-eicosatetraenoyl)-sn-glycero-3-phospho-(1D-myo-inositol 3,4,5-triphosphate) + ADP + H(+)</text>
        <dbReference type="Rhea" id="RHEA:43396"/>
        <dbReference type="ChEBI" id="CHEBI:15378"/>
        <dbReference type="ChEBI" id="CHEBI:30616"/>
        <dbReference type="ChEBI" id="CHEBI:77137"/>
        <dbReference type="ChEBI" id="CHEBI:83243"/>
        <dbReference type="ChEBI" id="CHEBI:456216"/>
    </reaction>
    <physiologicalReaction direction="left-to-right" evidence="41">
        <dbReference type="Rhea" id="RHEA:43397"/>
    </physiologicalReaction>
</comment>
<comment type="biophysicochemical properties">
    <kinetics>
        <KM evidence="33">1.77 uM for PIP2 (1,2-dioctanoyl-sn-glycero-3-phospho-(1D-myo-inositol-4,5-bisphosphate))</KM>
        <KM evidence="33">2 uM for ATP</KM>
        <Vmax evidence="33">1.7 pmol/min/ng enzyme for the phosphorylation of PIP2 (1,2-dioctanoyl-sn-glycero-3-phospho-(1D-myo-inositol-4,5-bisphosphate))</Vmax>
    </kinetics>
</comment>
<comment type="pathway">
    <text evidence="41 44">Phospholipid metabolism; phosphatidylinositol phosphate biosynthesis.</text>
</comment>
<comment type="subunit">
    <text evidence="1 30 32">Heterodimer of a catalytic subunit PIK3CA and a p85 regulatory subunit (PIK3R1, PIK3R2 or PIK3R3) (PubMed:26593112). Interacts with IRS1 in nuclear extracts (By similarity). Interacts with RUFY3 (By similarity). Interacts with RASD2 (By similarity). Interacts with APPL1. Interacts with HRAS and KRAS (By similarity). Interaction with HRAS/KRAS is required for PI3K pathway signaling and cell proliferation stimulated by EGF and FGF2 (By similarity). Interacts with FAM83B; activates the PI3K/AKT signaling cascade (PubMed:23676467).</text>
</comment>
<comment type="interaction">
    <interactant intactId="EBI-2116585">
        <id>P42336</id>
    </interactant>
    <interactant intactId="EBI-930964">
        <id>P54253</id>
        <label>ATXN1</label>
    </interactant>
    <organismsDiffer>false</organismsDiffer>
    <experiments>3</experiments>
</comment>
<comment type="interaction">
    <interactant intactId="EBI-2116585">
        <id>P42336</id>
    </interactant>
    <interactant intactId="EBI-946046">
        <id>P54252</id>
        <label>ATXN3</label>
    </interactant>
    <organismsDiffer>false</organismsDiffer>
    <experiments>3</experiments>
</comment>
<comment type="interaction">
    <interactant intactId="EBI-2116585">
        <id>P42336</id>
    </interactant>
    <interactant intactId="EBI-720706">
        <id>P21860</id>
        <label>ERBB3</label>
    </interactant>
    <organismsDiffer>false</organismsDiffer>
    <experiments>18</experiments>
</comment>
<comment type="interaction">
    <interactant intactId="EBI-2116585">
        <id>P42336</id>
    </interactant>
    <interactant intactId="EBI-852851">
        <id>P01100</id>
        <label>FOS</label>
    </interactant>
    <organismsDiffer>false</organismsDiffer>
    <experiments>3</experiments>
</comment>
<comment type="interaction">
    <interactant intactId="EBI-2116585">
        <id>P42336</id>
    </interactant>
    <interactant intactId="EBI-401755">
        <id>P62993</id>
        <label>GRB2</label>
    </interactant>
    <organismsDiffer>false</organismsDiffer>
    <experiments>6</experiments>
</comment>
<comment type="interaction">
    <interactant intactId="EBI-2116585">
        <id>P42336</id>
    </interactant>
    <interactant intactId="EBI-466029">
        <id>P42858</id>
        <label>HTT</label>
    </interactant>
    <organismsDiffer>false</organismsDiffer>
    <experiments>3</experiments>
</comment>
<comment type="interaction">
    <interactant intactId="EBI-2116585">
        <id>P42336</id>
    </interactant>
    <interactant intactId="EBI-517592">
        <id>P35568</id>
        <label>IRS1</label>
    </interactant>
    <organismsDiffer>false</organismsDiffer>
    <experiments>41</experiments>
</comment>
<comment type="interaction">
    <interactant intactId="EBI-2116585">
        <id>P42336</id>
    </interactant>
    <interactant intactId="EBI-79464">
        <id>P27986</id>
        <label>PIK3R1</label>
    </interactant>
    <organismsDiffer>false</organismsDiffer>
    <experiments>64</experiments>
</comment>
<comment type="interaction">
    <interactant intactId="EBI-2116585">
        <id>P42336</id>
    </interactant>
    <interactant intactId="EBI-9090282">
        <id>P27986-2</id>
        <label>PIK3R1</label>
    </interactant>
    <organismsDiffer>false</organismsDiffer>
    <experiments>3</experiments>
</comment>
<comment type="interaction">
    <interactant intactId="EBI-2116585">
        <id>P42336</id>
    </interactant>
    <interactant intactId="EBI-346930">
        <id>O00459</id>
        <label>PIK3R2</label>
    </interactant>
    <organismsDiffer>false</organismsDiffer>
    <experiments>49</experiments>
</comment>
<comment type="interaction">
    <interactant intactId="EBI-2116585">
        <id>P42336</id>
    </interactant>
    <interactant intactId="EBI-79893">
        <id>Q92569</id>
        <label>PIK3R3</label>
    </interactant>
    <organismsDiffer>false</organismsDiffer>
    <experiments>47</experiments>
</comment>
<comment type="domain">
    <text evidence="23 24">The PI3K-ABD domain and the PI3K-RBD domain interact with the PI3K/PI4K kinase domain. The C2 PI3K-type domain may facilitate the recruitment to the plasma membrane. The inhibitory interactions with PIK3R1 are mediated by the PI3K-ABD domain and the C2 PI3K-type domain with the iSH2 (inter-SH2) region of PIK3R1, and the C2 PI3K-type domain, the PI3K helical domain, and the PI3K/PI4K kinase domain with the nSH2 (N-terminal SH2) region of PIK3R1.</text>
</comment>
<comment type="disease">
    <text evidence="7 9 10 12 13 14 15 16 17 18 19 20 21 22 24 25 26 27">PIK3CA mutations are involved in various type of cancer. Most of the cancer-associated mutations are missense mutations and map to one of the three hotspots: Glu-542; Glu-545 and His-1047. Mutated isoforms participate in cellular transformation and tumorigenesis induced by oncogenic receptor tyrosine kinases (RTKs) and HRAS/KRAS. Interaction with HRAS/KRAS is required for Ras-driven tumor formation. Mutations increasing the lipid kinase activity are required for oncogenic signaling. The protein kinase activity may not be required for tumorigenesis.</text>
</comment>
<comment type="disease" evidence="15 16">
    <disease id="DI-01359">
        <name>Colorectal cancer</name>
        <acronym>CRC</acronym>
        <description>A complex disease characterized by malignant lesions arising from the inner wall of the large intestine (the colon) and the rectum. Genetic alterations are often associated with progression from premalignant lesion (adenoma) to invasive adenocarcinoma. Risk factors for cancer of the colon and rectum include colon polyps, long-standing ulcerative colitis, and genetic family history.</description>
        <dbReference type="MIM" id="114500"/>
    </disease>
    <text>The gene represented in this entry may be involved in disease pathogenesis.</text>
</comment>
<comment type="disease" evidence="19">
    <disease id="DI-02602">
        <name>Breast cancer</name>
        <acronym>BC</acronym>
        <description>A common malignancy originating from breast epithelial tissue. Breast neoplasms can be distinguished by their histologic pattern. Invasive ductal carcinoma is by far the most common type. Breast cancer is etiologically and genetically heterogeneous. Important genetic factors have been indicated by familial occurrence and bilateral involvement. Mutations at more than one locus can be involved in different families or even in the same case.</description>
        <dbReference type="MIM" id="114480"/>
    </disease>
    <text>Disease susceptibility is associated with variants affecting the gene represented in this entry.</text>
</comment>
<comment type="disease" evidence="10">
    <disease id="DI-01655">
        <name>Ovarian cancer</name>
        <acronym>OC</acronym>
        <description>The term ovarian cancer defines malignancies originating from ovarian tissue. Although many histologic types of ovarian tumors have been described, epithelial ovarian carcinoma is the most common form. Ovarian cancers are often asymptomatic and the recognized signs and symptoms, even of late-stage disease, are vague. Consequently, most patients are diagnosed with advanced disease.</description>
        <dbReference type="MIM" id="167000"/>
    </disease>
    <text>Disease susceptibility is associated with variants affecting the gene represented in this entry.</text>
</comment>
<comment type="disease" evidence="11">
    <disease id="DI-01708">
        <name>Hepatocellular carcinoma</name>
        <acronym>HCC</acronym>
        <description>A primary malignant neoplasm of epithelial liver cells. The major risk factors for HCC are chronic hepatitis B virus (HBV) infection, chronic hepatitis C virus (HCV) infection, prolonged dietary aflatoxin exposure, alcoholic cirrhosis, and cirrhosis due to other causes.</description>
        <dbReference type="MIM" id="114550"/>
    </disease>
    <text>The gene represented in this entry may be involved in disease pathogenesis.</text>
</comment>
<comment type="disease" evidence="22">
    <disease id="DI-00625">
        <name>Keratosis, seborrheic</name>
        <acronym>KERSEB</acronym>
        <description>A common benign skin tumor. Seborrheic keratoses usually begin with the appearance of one or more sharply defined, light brown, flat macules. The lesions may be sparse or numerous. As they initially grow, they develop a velvety to finely verrucous surface, followed by an uneven warty surface with multiple plugged follicles and a dull or lackluster appearance.</description>
        <dbReference type="MIM" id="182000"/>
    </disease>
    <text>The disease is caused by variants affecting the gene represented in this entry.</text>
</comment>
<comment type="disease" evidence="27 32">
    <disease id="DI-03624">
        <name>Megalencephaly-capillary malformation-polymicrogyria syndrome</name>
        <acronym>MCAP</acronym>
        <description>A syndrome characterized by a spectrum of anomalies including primary megalencephaly, prenatal overgrowth, brain and body asymmetry, cutaneous vascular malformations, digital anomalies consisting of syndactyly with or without postaxial polydactyly, connective tissue dysplasia involving the skin, subcutaneous tissue, and joints, and cortical brain malformations, most distinctively polymicrogyria.</description>
        <dbReference type="MIM" id="602501"/>
    </disease>
    <text>The disease is caused by variants affecting the gene represented in this entry.</text>
</comment>
<comment type="disease" evidence="26">
    <disease id="DI-03487">
        <name>Congenital lipomatous overgrowth, vascular malformations, and epidermal nevi</name>
        <acronym>CLOVE</acronym>
        <description>A sporadically occurring, non-hereditary disorder characterized by asymmetric somatic hypertrophy and anomalies in multiple organs. It is defined by four main clinical findings: congenital lipomatous overgrowth, vascular malformations, epidermal nevi, and skeletal/spinal abnormalities. The presence of truncal overgrowth and characteristic patterned macrodactyly at birth differentiates CLOVE from other syndromic forms of overgrowth.</description>
        <dbReference type="MIM" id="612918"/>
    </disease>
    <text>The disease is caused by variants affecting the gene represented in this entry.</text>
</comment>
<comment type="disease" evidence="29">
    <disease id="DI-03696">
        <name>Cowden syndrome 5</name>
        <acronym>CWS5</acronym>
        <description>A form of Cowden syndrome, a hamartomatous polyposis syndrome with age-related penetrance. Cowden syndrome is characterized by hamartomatous lesions affecting derivatives of ectodermal, mesodermal and endodermal layers, macrocephaly, facial trichilemmomas (benign tumors of the hair follicle infundibulum), acral keratoses, papillomatous papules, and elevated risk for development of several types of malignancy, particularly breast carcinoma in women and thyroid carcinoma in both men and women. Colon cancer and renal cell carcinoma have also been reported. Hamartomas can be found in virtually every organ, but most commonly in the skin, gastrointestinal tract, breast and thyroid.</description>
        <dbReference type="MIM" id="615108"/>
    </disease>
    <text>The disease is caused by variants affecting the gene represented in this entry.</text>
</comment>
<comment type="disease" evidence="34">
    <disease id="DI-05367">
        <name>CLAPO syndrome</name>
        <acronym>CLAPO</acronym>
        <description>A syndrome characterized by capillary malformation of the lower lip, lymphatic malformation of the face and neck, asymmetry of face and limbs and partial or generalised overgrowth.</description>
        <dbReference type="MIM" id="613089"/>
    </disease>
    <text evidence="34">The disease may be caused by variants affecting the gene represented in this entry. The tissue distribution of the clinical manifestations in CLAPO seems to follow a pattern of somatic mosaicism.</text>
</comment>
<comment type="disease" evidence="28">
    <disease id="DI-05365">
        <name>Macrodactyly</name>
        <acronym>MADAC</acronym>
        <description>A congenital anomaly characterized by fibrofatty tissue enlargement and bony overgrowth affecting the digits or the entire hand or foot.</description>
        <dbReference type="MIM" id="155500"/>
    </disease>
    <text evidence="28">The disease may be caused by variants affecting the gene represented in this entry. The tissue distribution of the clinical manifestations in MADAC seems to follow a pattern of somatic mosaicism.</text>
</comment>
<comment type="disease" evidence="35">
    <disease id="DI-06256">
        <name>Cerebral cavernous malformations 4</name>
        <acronym>CCM4</acronym>
        <description>A form of cerebral cavernous malformations, a congenital vascular anomaly of the central nervous system that can result in hemorrhagic stroke, seizures, recurrent headaches, and focal neurologic deficits. The lesions are characterized by grossly enlarged blood vessels consisting of a single layer of endothelium and without any intervening neural tissue, ranging in diameter from a few millimeters to several centimeters. CCM4 cases occur sporadically.</description>
        <dbReference type="MIM" id="619538"/>
    </disease>
    <text>The disease is caused by variants affecting the gene represented in this entry.</text>
</comment>
<comment type="disease" evidence="36">
    <disease id="DI-06873">
        <name>Hemifacial myohyperplasia</name>
        <acronym>HFMH</acronym>
        <description>A rare disease characterized by facial asymmetry due to unilateral muscular hypertrophy mimicking spasm and orofacial dystonia.</description>
        <dbReference type="MIM" id="606773"/>
    </disease>
    <text>The disease is caused by variants affecting the gene represented in this entry.</text>
</comment>
<comment type="miscellaneous">
    <text evidence="42">The avian sarcoma virus 16 genome encodes an oncogene derived from PIK3CA.</text>
</comment>
<comment type="similarity">
    <text evidence="3 5 6">Belongs to the PI3/PI4-kinase family.</text>
</comment>
<comment type="online information" name="Atlas of Genetics and Cytogenetics in Oncology and Haematology">
    <link uri="https://atlasgeneticsoncology.org/gene/415/PIK3CA"/>
</comment>
<feature type="chain" id="PRO_0000088785" description="Phosphatidylinositol 4,5-bisphosphate 3-kinase catalytic subunit alpha isoform">
    <location>
        <begin position="1"/>
        <end position="1068"/>
    </location>
</feature>
<feature type="domain" description="PI3K-ABD" evidence="3">
    <location>
        <begin position="16"/>
        <end position="105"/>
    </location>
</feature>
<feature type="domain" description="PI3K-RBD" evidence="5">
    <location>
        <begin position="187"/>
        <end position="289"/>
    </location>
</feature>
<feature type="domain" description="C2 PI3K-type" evidence="6">
    <location>
        <begin position="330"/>
        <end position="487"/>
    </location>
</feature>
<feature type="domain" description="PIK helical" evidence="4">
    <location>
        <begin position="517"/>
        <end position="694"/>
    </location>
</feature>
<feature type="domain" description="PI3K/PI4K catalytic" evidence="2">
    <location>
        <begin position="765"/>
        <end position="1051"/>
    </location>
</feature>
<feature type="region of interest" description="G-loop" evidence="2">
    <location>
        <begin position="771"/>
        <end position="777"/>
    </location>
</feature>
<feature type="region of interest" description="Catalytic loop" evidence="2">
    <location>
        <begin position="912"/>
        <end position="920"/>
    </location>
</feature>
<feature type="region of interest" description="Activation loop" evidence="2">
    <location>
        <begin position="931"/>
        <end position="957"/>
    </location>
</feature>
<feature type="site" description="Implicated in the recognition of ATP as well as PIP2. Also crucial for autophosphorylation of the p85alpha subunit" evidence="43">
    <location>
        <position position="776"/>
    </location>
</feature>
<feature type="sequence variant" id="VAR_026166" description="In CRC; likely involved in disease pathogenesis; shows an increase in lipid kinase activity; may disrupt the interaction between the PI3K-ABD domain and the N-terminal lobe of PI3K/PI4K kinase domain possibly affecting the conformation of the kinase domain; dbSNP:rs772110575." evidence="15">
    <original>R</original>
    <variation>H</variation>
    <location>
        <position position="38"/>
    </location>
</feature>
<feature type="sequence variant" id="VAR_042942" description="In dbSNP:rs1051399." evidence="37">
    <original>I</original>
    <variation>V</variation>
    <location>
        <position position="43"/>
    </location>
</feature>
<feature type="sequence variant" id="VAR_069251" description="In MCAP; dbSNP:rs1057519929." evidence="27">
    <original>E</original>
    <variation>K</variation>
    <location>
        <position position="81"/>
    </location>
</feature>
<feature type="sequence variant" id="VAR_081475" description="In CLAPO; uncertain significance; somatic mutation; dbSNP:rs1560137208." evidence="34">
    <original>F</original>
    <variation>S</variation>
    <location>
        <position position="83"/>
    </location>
</feature>
<feature type="sequence variant" id="VAR_026167" description="In MCAP; also found in a glioblastoma multiforme sample; dbSNP:rs121913287." evidence="14 27">
    <original>R</original>
    <variation>Q</variation>
    <location>
        <position position="88"/>
    </location>
</feature>
<feature type="sequence variant" id="VAR_026168" description="In CRC; likely involved in disease pathogenesis; shows an increase in lipid kinase activity; dbSNP:rs1057519930." evidence="15">
    <original>G</original>
    <variation>V</variation>
    <location>
        <position position="106"/>
    </location>
</feature>
<feature type="sequence variant" id="VAR_075634" description="In MCAP; increased phosphatidylinositol 3-kinase signaling; decreased interaction with p85 regulatory subunit; no effect on protein abundance; dbSNP:rs863225460." evidence="32">
    <original>I</original>
    <variation>N</variation>
    <location>
        <position position="112"/>
    </location>
</feature>
<feature type="sequence variant" id="VAR_081476" description="In CLAPO and MADAC; uncertain significance; somatic mutation in CLAPO and MADAC patients; dbSNP:rs200018596." evidence="28 34">
    <original>R</original>
    <variation>P</variation>
    <location>
        <position position="115"/>
    </location>
</feature>
<feature type="sequence variant" id="VAR_069786" description="In CWS5; dbSNP:rs587777790." evidence="29">
    <original>G</original>
    <variation>D</variation>
    <location>
        <position position="118"/>
    </location>
</feature>
<feature type="sequence variant" id="VAR_069787" description="In CWS5; dbSNP:rs587777791." evidence="29">
    <original>E</original>
    <variation>K</variation>
    <location>
        <position position="135"/>
    </location>
</feature>
<feature type="sequence variant" id="VAR_069788" description="In CWS5; dbSNP:rs587777792." evidence="29">
    <original>E</original>
    <variation>K</variation>
    <location>
        <position position="218"/>
    </location>
</feature>
<feature type="sequence variant" id="VAR_042943" description="In dbSNP:rs1051407." evidence="37">
    <original>S</original>
    <variation>R</variation>
    <location>
        <position position="332"/>
    </location>
</feature>
<feature type="sequence variant" id="VAR_026169" description="Found in a cancer sample; uncertain significance; dbSNP:rs2108393253." evidence="21">
    <original>Y</original>
    <variation>C</variation>
    <location>
        <position position="343"/>
    </location>
</feature>
<feature type="sequence variant" id="VAR_069789" description="In CWS5; dbSNP:rs587777793." evidence="29">
    <original>V</original>
    <variation>I</variation>
    <location>
        <position position="356"/>
    </location>
</feature>
<feature type="sequence variant" id="VAR_069252" description="In MCAP; dbSNP:rs1576935161." evidence="27">
    <original>G</original>
    <variation>R</variation>
    <location>
        <position position="364"/>
    </location>
</feature>
<feature type="sequence variant" id="VAR_069253" description="In MCAP; dbSNP:rs1064793732." evidence="27">
    <original>E</original>
    <variation>K</variation>
    <location>
        <position position="365"/>
    </location>
</feature>
<feature type="sequence variant" id="VAR_069254" description="In MCAP; dbSNP:rs397514565." evidence="27">
    <original>C</original>
    <variation>Y</variation>
    <location>
        <position position="378"/>
    </location>
</feature>
<feature type="sequence variant" id="VAR_069790" description="In CWS5; dbSNP:rs587777794." evidence="29">
    <original>R</original>
    <variation>K</variation>
    <location>
        <position position="382"/>
    </location>
</feature>
<feature type="sequence variant" id="VAR_026170" description="In dbSNP:rs2230461." evidence="21">
    <original>I</original>
    <variation>M</variation>
    <location>
        <position position="391"/>
    </location>
</feature>
<feature type="sequence variant" id="VAR_026171" description="In CLOVE, CRC and CLAPO; uncertain significance; somatic mutation in CLAPO patients; shows an increase in lipid kinase activity; may increase the affinity for lipid membranes; dbSNP:rs121913272." evidence="15 26 34">
    <original>C</original>
    <variation>R</variation>
    <location>
        <position position="420"/>
    </location>
</feature>
<feature type="sequence variant" id="VAR_026172" description="In CRC; likely involved in disease pathogenesis; shows an increase in lipid kinase activity; may disrupt the interaction of the C2 PI3K-type domain with the iSH2 region of the p85 regulatory subunit; dbSNP:rs1057519925." evidence="15">
    <original>E</original>
    <variation>Q</variation>
    <location>
        <position position="453"/>
    </location>
</feature>
<feature type="sequence variant" id="VAR_069255" description="In MCAP." evidence="27">
    <location>
        <position position="453"/>
    </location>
</feature>
<feature type="sequence variant" id="VAR_026173" description="In CLOVE, KERSEB, CRC, BC, CLAPO, MADAC, CCM4 and HFMH; somatic mutation; also found in glioblastoma multiforme and endometrial carcinoma; somatic mutation; shows an increase in lipid kinase activity; oncogenic in vivo; occurs in the interface between the PI3K helical domain and the nSH2 (N-terminal SH2) region of the p85 regulatory subunit and may reduce the inhibitory effect of p85; requires interaction with RAS to induce cellular transformation; increased AKT and RPS6 phosphorylation in HFMH patient's cells; dbSNP:rs121913273." evidence="9 13 14 15 16 18 19 20 21 22 26 28 34 35 36">
    <original>E</original>
    <variation>K</variation>
    <location>
        <position position="542"/>
    </location>
</feature>
<feature type="sequence variant" id="VAR_026174" description="Found in an endometrial carcinoma sample; uncertain significance; dbSNP:rs121913273." evidence="18">
    <original>E</original>
    <variation>Q</variation>
    <location>
        <position position="542"/>
    </location>
</feature>
<feature type="sequence variant" id="VAR_026175" description="In BC; uncertain significance; dbSNP:rs1057519927." evidence="19">
    <original>E</original>
    <variation>V</variation>
    <location>
        <position position="542"/>
    </location>
</feature>
<feature type="sequence variant" id="VAR_026176" description="In CWS5 and HCC; also found in a glioblastoma multiforme sample; dbSNP:rs121913274." evidence="11 14 29">
    <original>E</original>
    <variation>A</variation>
    <location>
        <position position="545"/>
    </location>
</feature>
<feature type="sequence variant" id="VAR_026177" description="In KERSEB; also found in an endometrial carcinoma sample; dbSNP:rs121913274." evidence="10 16 18 22">
    <original>E</original>
    <variation>G</variation>
    <location>
        <position position="545"/>
    </location>
</feature>
<feature type="sequence variant" id="VAR_026178" description="In MCAP, KERSEB, CRC, BC and HFMH; somatic mutation; shows an increase in lipid kinase activity; oncogenic in vivo; occurs in the interface between the PI3K helical domain and the nSH2 (N-terminal SH2) region of the p85 regulatory subunit and may reduce the inhibitory effect of p85; requires interaction with RAS to induce cellular transformation; enhances invadopodia-mediated extracellular matrix degradation and invasion in breast cancer cells; increased AKT and RPS6 phosphorylation in HFMH patient's cells; dbSNP:rs104886003." evidence="9 10 12 13 15 16 18 19 20 21 22 25 27 36">
    <original>E</original>
    <variation>K</variation>
    <location>
        <position position="545"/>
    </location>
</feature>
<feature type="sequence variant" id="VAR_026179" description="In BC; uncertain significance; dbSNP:rs121913286." evidence="10">
    <original>Q</original>
    <variation>E</variation>
    <location>
        <position position="546"/>
    </location>
</feature>
<feature type="sequence variant" id="VAR_026180" description="In OC; uncertain significance; dbSNP:rs121913286." evidence="10">
    <original>Q</original>
    <variation>K</variation>
    <location>
        <position position="546"/>
    </location>
</feature>
<feature type="sequence variant" id="VAR_026181" description="Found in an anaplastic astrocytoma sample; uncertain significance; dbSNP:rs397517201." evidence="9">
    <original>Q</original>
    <variation>P</variation>
    <location>
        <position position="546"/>
    </location>
</feature>
<feature type="sequence variant" id="VAR_026182" description="In BC; uncertain significance; dbSNP:rs397517201." evidence="19">
    <original>Q</original>
    <variation>R</variation>
    <location>
        <position position="546"/>
    </location>
</feature>
<feature type="sequence variant" id="VAR_069256" description="In MCAP; dbSNP:rs867262025." evidence="27">
    <original>E</original>
    <variation>K</variation>
    <location>
        <position position="726"/>
    </location>
</feature>
<feature type="sequence variant" id="VAR_069257" description="In MCAP; dbSNP:rs587776932." evidence="27">
    <original>G</original>
    <variation>R</variation>
    <location>
        <position position="914"/>
    </location>
</feature>
<feature type="sequence variant" id="VAR_026183" description="Found in an endometrial carcinoma sample; uncertain significance; dbSNP:rs1448660730." evidence="18">
    <original>G</original>
    <variation>R</variation>
    <location>
        <position position="1007"/>
    </location>
</feature>
<feature type="sequence variant" id="VAR_026184" description="In MCAP; also found in an endometrial carcinoma sample; dbSNP:rs121913288." evidence="18 27">
    <original>Y</original>
    <variation>C</variation>
    <location>
        <position position="1021"/>
    </location>
</feature>
<feature type="sequence variant" id="VAR_026185" description="Found in an endometrial carcinoma sample; uncertain significance; dbSNP:rs2108429509." evidence="18">
    <original>Y</original>
    <variation>H</variation>
    <location>
        <position position="1021"/>
    </location>
</feature>
<feature type="sequence variant" id="VAR_026186" description="Found in a glioblastoma multiforme sample; uncertain significance; dbSNP:rs2108429509." evidence="9">
    <original>Y</original>
    <variation>N</variation>
    <location>
        <position position="1021"/>
    </location>
</feature>
<feature type="sequence variant" id="VAR_026187" description="In CRC; uncertain significance; dbSNP:rs2108429549." evidence="16">
    <original>R</original>
    <variation>Q</variation>
    <location>
        <position position="1023"/>
    </location>
</feature>
<feature type="sequence variant" id="VAR_069258" description="In MCAP; dbSNP:rs397517202." evidence="27">
    <original>T</original>
    <variation>A</variation>
    <location>
        <position position="1025"/>
    </location>
</feature>
<feature type="sequence variant" id="VAR_026188" description="Found in a glioblastoma multiforme sample; uncertain significance; dbSNP:rs1553826166." evidence="14">
    <original>T</original>
    <variation>N</variation>
    <location>
        <position position="1025"/>
    </location>
</feature>
<feature type="sequence variant" id="VAR_026189" description="In MCAP; also found in an endometrial carcinoma sample; dbSNP:rs1242945375." evidence="18 27">
    <original>A</original>
    <variation>V</variation>
    <location>
        <position position="1035"/>
    </location>
</feature>
<feature type="sequence variant" id="VAR_026190" description="In MCAP and CRC; also found in an endometrial carcinoma sample; shows an increase in lipid kinase activity; dbSNP:rs121913283." evidence="15 18 27">
    <original>M</original>
    <variation>I</variation>
    <location>
        <position position="1043"/>
    </location>
</feature>
<feature type="sequence variant" id="VAR_026191" description="In BC, CLAPO, MADAC and CCM4; somatic mutation; dbSNP:rs121913279." evidence="9 10 16 19 28 34 35">
    <original>H</original>
    <variation>L</variation>
    <location>
        <position position="1047"/>
    </location>
</feature>
<feature type="sequence variant" id="VAR_026192" description="In CLOVE, KERSEB, CRC, BC, OC, MADAC, CCM4 and HFMH; also found in an endometrial carcinoma sample; somatic mutation; shows an increase in lipid kinase activity; oncogenic in vivo; requires binding to p85 regulatory subunit to induce cellular transformation but not interaction with RAS; may mimic the conformatitonal change triggered by the interaction with RAS; enhances invadopodia-mediated extracellular matrix degradation and invasion in breast cancer cells; may alter the interaction of the PI3K/PI4K kinase domain with the cell membrane; increased AKT and RPS6 phosphorylation in HFMH patient's cell; dbSNP:rs121913279." evidence="7 9 10 12 13 15 16 17 18 19 20 21 22 24 25 26 28 35 36">
    <original>H</original>
    <variation>R</variation>
    <location>
        <position position="1047"/>
    </location>
</feature>
<feature type="sequence variant" id="VAR_026193" description="In MCAP; also found in an endometrial carcinoma sample; dbSNP:rs121913281." evidence="18 27">
    <original>H</original>
    <variation>Y</variation>
    <location>
        <position position="1047"/>
    </location>
</feature>
<feature type="sequence variant" id="VAR_069259" description="In MCAP; dbSNP:rs121913277." evidence="27">
    <original>G</original>
    <variation>S</variation>
    <location>
        <position position="1049"/>
    </location>
</feature>
<feature type="sequence variant" id="VAR_026194" description="Found in an endometrial carcinoma sample; uncertain significance; dbSNP:rs2108429937." evidence="18">
    <original>G</original>
    <variation>D</variation>
    <location>
        <position position="1050"/>
    </location>
</feature>
<feature type="sequence variant" id="VAR_026195" description="Found in an endometrial carcinoma sample; uncertain significance; dbSNP:rs2108429956." evidence="18">
    <original>T</original>
    <variation>K</variation>
    <location>
        <position position="1052"/>
    </location>
</feature>
<feature type="sequence variant" id="VAR_026196" description="Found in an endometrial carcinoma sample; uncertain significance; dbSNP:rs1560150596." evidence="18">
    <original>H</original>
    <variation>L</variation>
    <location>
        <position position="1065"/>
    </location>
</feature>
<feature type="sequence variant" id="VAR_026197" description="Found in brain tumors; uncertain significance; dbSNP:rs2108430115." evidence="9">
    <original>H</original>
    <variation>Y</variation>
    <location>
        <position position="1065"/>
    </location>
</feature>
<feature type="sequence conflict" description="In Ref. 1; CAA82333." evidence="40" ref="1">
    <original>N</original>
    <variation>H</variation>
    <location>
        <position position="170"/>
    </location>
</feature>
<feature type="sequence conflict" description="In Ref. 1; CAA82333." evidence="40" ref="1">
    <original>K</original>
    <variation>R</variation>
    <location>
        <position position="187"/>
    </location>
</feature>
<feature type="sequence conflict" description="In Ref. 1; CAA82333." evidence="40" ref="1">
    <original>ML</original>
    <variation>KM</variation>
    <location>
        <begin position="286"/>
        <end position="287"/>
    </location>
</feature>
<feature type="sequence conflict" description="In Ref. 1; CAA82333." evidence="40" ref="1">
    <original>V</original>
    <variation>L</variation>
    <location>
        <position position="346"/>
    </location>
</feature>
<feature type="sequence conflict" description="In Ref. 1; CAA82333." evidence="40" ref="1">
    <original>K</original>
    <variation>R</variation>
    <location>
        <position position="723"/>
    </location>
</feature>
<feature type="sequence conflict" description="In Ref. 1; CAA82333." evidence="40" ref="1">
    <original>F</original>
    <variation>L</variation>
    <location>
        <position position="751"/>
    </location>
</feature>
<feature type="sequence conflict" description="In Ref. 1; CAA82333." evidence="40" ref="1">
    <original>E</original>
    <variation>K</variation>
    <location>
        <position position="767"/>
    </location>
</feature>
<feature type="strand" evidence="46">
    <location>
        <begin position="5"/>
        <end position="10"/>
    </location>
</feature>
<feature type="strand" evidence="46">
    <location>
        <begin position="13"/>
        <end position="15"/>
    </location>
</feature>
<feature type="strand" evidence="46">
    <location>
        <begin position="18"/>
        <end position="25"/>
    </location>
</feature>
<feature type="strand" evidence="66">
    <location>
        <begin position="27"/>
        <end position="29"/>
    </location>
</feature>
<feature type="strand" evidence="46">
    <location>
        <begin position="31"/>
        <end position="37"/>
    </location>
</feature>
<feature type="helix" evidence="46">
    <location>
        <begin position="42"/>
        <end position="52"/>
    </location>
</feature>
<feature type="helix" evidence="46">
    <location>
        <begin position="53"/>
        <end position="55"/>
    </location>
</feature>
<feature type="strand" evidence="60">
    <location>
        <begin position="56"/>
        <end position="58"/>
    </location>
</feature>
<feature type="helix" evidence="46">
    <location>
        <begin position="59"/>
        <end position="61"/>
    </location>
</feature>
<feature type="helix" evidence="46">
    <location>
        <begin position="65"/>
        <end position="67"/>
    </location>
</feature>
<feature type="strand" evidence="46">
    <location>
        <begin position="69"/>
        <end position="74"/>
    </location>
</feature>
<feature type="strand" evidence="47">
    <location>
        <begin position="75"/>
        <end position="77"/>
    </location>
</feature>
<feature type="strand" evidence="46">
    <location>
        <begin position="79"/>
        <end position="82"/>
    </location>
</feature>
<feature type="strand" evidence="60">
    <location>
        <begin position="85"/>
        <end position="87"/>
    </location>
</feature>
<feature type="helix" evidence="46">
    <location>
        <begin position="89"/>
        <end position="91"/>
    </location>
</feature>
<feature type="strand" evidence="46">
    <location>
        <begin position="94"/>
        <end position="102"/>
    </location>
</feature>
<feature type="strand" evidence="50">
    <location>
        <begin position="105"/>
        <end position="107"/>
    </location>
</feature>
<feature type="helix" evidence="61">
    <location>
        <begin position="108"/>
        <end position="121"/>
    </location>
</feature>
<feature type="helix" evidence="61">
    <location>
        <begin position="126"/>
        <end position="129"/>
    </location>
</feature>
<feature type="helix" evidence="61">
    <location>
        <begin position="134"/>
        <end position="142"/>
    </location>
</feature>
<feature type="helix" evidence="61">
    <location>
        <begin position="144"/>
        <end position="154"/>
    </location>
</feature>
<feature type="turn" evidence="61">
    <location>
        <begin position="155"/>
        <end position="159"/>
    </location>
</feature>
<feature type="helix" evidence="61">
    <location>
        <begin position="160"/>
        <end position="166"/>
    </location>
</feature>
<feature type="helix" evidence="61">
    <location>
        <begin position="179"/>
        <end position="182"/>
    </location>
</feature>
<feature type="turn" evidence="45">
    <location>
        <begin position="183"/>
        <end position="185"/>
    </location>
</feature>
<feature type="helix" evidence="58">
    <location>
        <begin position="186"/>
        <end position="188"/>
    </location>
</feature>
<feature type="strand" evidence="61">
    <location>
        <begin position="189"/>
        <end position="197"/>
    </location>
</feature>
<feature type="turn" evidence="46">
    <location>
        <begin position="199"/>
        <end position="202"/>
    </location>
</feature>
<feature type="strand" evidence="61">
    <location>
        <begin position="204"/>
        <end position="212"/>
    </location>
</feature>
<feature type="helix" evidence="61">
    <location>
        <begin position="217"/>
        <end position="230"/>
    </location>
</feature>
<feature type="turn" evidence="67">
    <location>
        <begin position="231"/>
        <end position="233"/>
    </location>
</feature>
<feature type="helix" evidence="57">
    <location>
        <begin position="236"/>
        <end position="246"/>
    </location>
</feature>
<feature type="helix" evidence="53">
    <location>
        <begin position="247"/>
        <end position="249"/>
    </location>
</feature>
<feature type="strand" evidence="61">
    <location>
        <begin position="250"/>
        <end position="254"/>
    </location>
</feature>
<feature type="turn" evidence="68">
    <location>
        <begin position="255"/>
        <end position="257"/>
    </location>
</feature>
<feature type="strand" evidence="69">
    <location>
        <begin position="259"/>
        <end position="261"/>
    </location>
</feature>
<feature type="strand" evidence="60">
    <location>
        <begin position="263"/>
        <end position="265"/>
    </location>
</feature>
<feature type="helix" evidence="61">
    <location>
        <begin position="267"/>
        <end position="269"/>
    </location>
</feature>
<feature type="helix" evidence="61">
    <location>
        <begin position="271"/>
        <end position="279"/>
    </location>
</feature>
<feature type="strand" evidence="61">
    <location>
        <begin position="284"/>
        <end position="289"/>
    </location>
</feature>
<feature type="helix" evidence="61">
    <location>
        <begin position="290"/>
        <end position="294"/>
    </location>
</feature>
<feature type="helix" evidence="61">
    <location>
        <begin position="306"/>
        <end position="308"/>
    </location>
</feature>
<feature type="strand" evidence="50">
    <location>
        <begin position="319"/>
        <end position="321"/>
    </location>
</feature>
<feature type="strand" evidence="61">
    <location>
        <begin position="323"/>
        <end position="326"/>
    </location>
</feature>
<feature type="helix" evidence="61">
    <location>
        <begin position="327"/>
        <end position="329"/>
    </location>
</feature>
<feature type="strand" evidence="61">
    <location>
        <begin position="332"/>
        <end position="343"/>
    </location>
</feature>
<feature type="turn" evidence="46">
    <location>
        <begin position="348"/>
        <end position="350"/>
    </location>
</feature>
<feature type="strand" evidence="61">
    <location>
        <begin position="353"/>
        <end position="362"/>
    </location>
</feature>
<feature type="strand" evidence="61">
    <location>
        <begin position="365"/>
        <end position="368"/>
    </location>
</feature>
<feature type="strand" evidence="52">
    <location>
        <begin position="378"/>
        <end position="380"/>
    </location>
</feature>
<feature type="strand" evidence="61">
    <location>
        <begin position="382"/>
        <end position="392"/>
    </location>
</feature>
<feature type="helix" evidence="61">
    <location>
        <begin position="393"/>
        <end position="395"/>
    </location>
</feature>
<feature type="strand" evidence="61">
    <location>
        <begin position="400"/>
        <end position="408"/>
    </location>
</feature>
<feature type="strand" evidence="65">
    <location>
        <begin position="413"/>
        <end position="415"/>
    </location>
</feature>
<feature type="strand" evidence="61">
    <location>
        <begin position="420"/>
        <end position="430"/>
    </location>
</feature>
<feature type="strand" evidence="61">
    <location>
        <begin position="434"/>
        <end position="436"/>
    </location>
</feature>
<feature type="strand" evidence="61">
    <location>
        <begin position="439"/>
        <end position="444"/>
    </location>
</feature>
<feature type="strand" evidence="63">
    <location>
        <begin position="446"/>
        <end position="448"/>
    </location>
</feature>
<feature type="strand" evidence="51">
    <location>
        <begin position="454"/>
        <end position="456"/>
    </location>
</feature>
<feature type="strand" evidence="67">
    <location>
        <begin position="458"/>
        <end position="460"/>
    </location>
</feature>
<feature type="strand" evidence="61">
    <location>
        <begin position="468"/>
        <end position="470"/>
    </location>
</feature>
<feature type="strand" evidence="61">
    <location>
        <begin position="472"/>
        <end position="477"/>
    </location>
</feature>
<feature type="strand" evidence="61">
    <location>
        <begin position="481"/>
        <end position="485"/>
    </location>
</feature>
<feature type="helix" evidence="61">
    <location>
        <begin position="489"/>
        <end position="504"/>
    </location>
</feature>
<feature type="helix" evidence="61">
    <location>
        <begin position="508"/>
        <end position="511"/>
    </location>
</feature>
<feature type="strand" evidence="48">
    <location>
        <begin position="515"/>
        <end position="517"/>
    </location>
</feature>
<feature type="turn" evidence="61">
    <location>
        <begin position="520"/>
        <end position="522"/>
    </location>
</feature>
<feature type="helix" evidence="61">
    <location>
        <begin position="525"/>
        <end position="536"/>
    </location>
</feature>
<feature type="strand" evidence="48">
    <location>
        <begin position="539"/>
        <end position="541"/>
    </location>
</feature>
<feature type="helix" evidence="61">
    <location>
        <begin position="545"/>
        <end position="553"/>
    </location>
</feature>
<feature type="helix" evidence="61">
    <location>
        <begin position="555"/>
        <end position="558"/>
    </location>
</feature>
<feature type="helix" evidence="61">
    <location>
        <begin position="562"/>
        <end position="564"/>
    </location>
</feature>
<feature type="helix" evidence="61">
    <location>
        <begin position="565"/>
        <end position="569"/>
    </location>
</feature>
<feature type="strand" evidence="68">
    <location>
        <begin position="570"/>
        <end position="572"/>
    </location>
</feature>
<feature type="helix" evidence="61">
    <location>
        <begin position="577"/>
        <end position="588"/>
    </location>
</feature>
<feature type="helix" evidence="61">
    <location>
        <begin position="595"/>
        <end position="598"/>
    </location>
</feature>
<feature type="helix" evidence="61">
    <location>
        <begin position="599"/>
        <end position="602"/>
    </location>
</feature>
<feature type="strand" evidence="64">
    <location>
        <begin position="603"/>
        <end position="605"/>
    </location>
</feature>
<feature type="helix" evidence="61">
    <location>
        <begin position="609"/>
        <end position="622"/>
    </location>
</feature>
<feature type="helix" evidence="61">
    <location>
        <begin position="625"/>
        <end position="630"/>
    </location>
</feature>
<feature type="helix" evidence="61">
    <location>
        <begin position="632"/>
        <end position="638"/>
    </location>
</feature>
<feature type="helix" evidence="61">
    <location>
        <begin position="639"/>
        <end position="641"/>
    </location>
</feature>
<feature type="strand" evidence="61">
    <location>
        <begin position="643"/>
        <end position="646"/>
    </location>
</feature>
<feature type="helix" evidence="61">
    <location>
        <begin position="648"/>
        <end position="657"/>
    </location>
</feature>
<feature type="helix" evidence="61">
    <location>
        <begin position="661"/>
        <end position="672"/>
    </location>
</feature>
<feature type="turn" evidence="61">
    <location>
        <begin position="673"/>
        <end position="676"/>
    </location>
</feature>
<feature type="turn" evidence="61">
    <location>
        <begin position="678"/>
        <end position="680"/>
    </location>
</feature>
<feature type="helix" evidence="61">
    <location>
        <begin position="681"/>
        <end position="694"/>
    </location>
</feature>
<feature type="helix" evidence="61">
    <location>
        <begin position="698"/>
        <end position="721"/>
    </location>
</feature>
<feature type="strand" evidence="59">
    <location>
        <begin position="724"/>
        <end position="726"/>
    </location>
</feature>
<feature type="helix" evidence="61">
    <location>
        <begin position="728"/>
        <end position="739"/>
    </location>
</feature>
<feature type="helix" evidence="61">
    <location>
        <begin position="742"/>
        <end position="747"/>
    </location>
</feature>
<feature type="strand" evidence="61">
    <location>
        <begin position="749"/>
        <end position="753"/>
    </location>
</feature>
<feature type="strand" evidence="61">
    <location>
        <begin position="756"/>
        <end position="761"/>
    </location>
</feature>
<feature type="helix" evidence="61">
    <location>
        <begin position="766"/>
        <end position="768"/>
    </location>
</feature>
<feature type="strand" evidence="59">
    <location>
        <begin position="773"/>
        <end position="776"/>
    </location>
</feature>
<feature type="strand" evidence="61">
    <location>
        <begin position="779"/>
        <end position="784"/>
    </location>
</feature>
<feature type="strand" evidence="56">
    <location>
        <begin position="786"/>
        <end position="789"/>
    </location>
</feature>
<feature type="helix" evidence="61">
    <location>
        <begin position="790"/>
        <end position="792"/>
    </location>
</feature>
<feature type="strand" evidence="61">
    <location>
        <begin position="795"/>
        <end position="805"/>
    </location>
</feature>
<feature type="helix" evidence="61">
    <location>
        <begin position="808"/>
        <end position="826"/>
    </location>
</feature>
<feature type="strand" evidence="61">
    <location>
        <begin position="838"/>
        <end position="842"/>
    </location>
</feature>
<feature type="strand" evidence="61">
    <location>
        <begin position="845"/>
        <end position="849"/>
    </location>
</feature>
<feature type="strand" evidence="61">
    <location>
        <begin position="852"/>
        <end position="856"/>
    </location>
</feature>
<feature type="helix" evidence="61">
    <location>
        <begin position="857"/>
        <end position="860"/>
    </location>
</feature>
<feature type="helix" evidence="55">
    <location>
        <begin position="863"/>
        <end position="865"/>
    </location>
</feature>
<feature type="strand" evidence="66">
    <location>
        <begin position="866"/>
        <end position="868"/>
    </location>
</feature>
<feature type="helix" evidence="55">
    <location>
        <begin position="869"/>
        <end position="871"/>
    </location>
</feature>
<feature type="helix" evidence="59">
    <location>
        <begin position="872"/>
        <end position="874"/>
    </location>
</feature>
<feature type="helix" evidence="61">
    <location>
        <begin position="876"/>
        <end position="884"/>
    </location>
</feature>
<feature type="helix" evidence="53">
    <location>
        <begin position="887"/>
        <end position="889"/>
    </location>
</feature>
<feature type="helix" evidence="61">
    <location>
        <begin position="890"/>
        <end position="911"/>
    </location>
</feature>
<feature type="strand" evidence="61">
    <location>
        <begin position="920"/>
        <end position="924"/>
    </location>
</feature>
<feature type="strand" evidence="64">
    <location>
        <begin position="925"/>
        <end position="927"/>
    </location>
</feature>
<feature type="strand" evidence="61">
    <location>
        <begin position="929"/>
        <end position="931"/>
    </location>
</feature>
<feature type="strand" evidence="69">
    <location>
        <begin position="935"/>
        <end position="937"/>
    </location>
</feature>
<feature type="turn" evidence="57">
    <location>
        <begin position="938"/>
        <end position="941"/>
    </location>
</feature>
<feature type="helix" evidence="46">
    <location>
        <begin position="942"/>
        <end position="945"/>
    </location>
</feature>
<feature type="helix" evidence="54">
    <location>
        <begin position="948"/>
        <end position="950"/>
    </location>
</feature>
<feature type="strand" evidence="54">
    <location>
        <begin position="951"/>
        <end position="954"/>
    </location>
</feature>
<feature type="helix" evidence="61">
    <location>
        <begin position="958"/>
        <end position="964"/>
    </location>
</feature>
<feature type="turn" evidence="61">
    <location>
        <begin position="965"/>
        <end position="967"/>
    </location>
</feature>
<feature type="helix" evidence="61">
    <location>
        <begin position="971"/>
        <end position="973"/>
    </location>
</feature>
<feature type="helix" evidence="61">
    <location>
        <begin position="975"/>
        <end position="993"/>
    </location>
</feature>
<feature type="helix" evidence="61">
    <location>
        <begin position="995"/>
        <end position="1003"/>
    </location>
</feature>
<feature type="turn" evidence="61">
    <location>
        <begin position="1004"/>
        <end position="1007"/>
    </location>
</feature>
<feature type="strand" evidence="62">
    <location>
        <begin position="1013"/>
        <end position="1015"/>
    </location>
</feature>
<feature type="helix" evidence="61">
    <location>
        <begin position="1016"/>
        <end position="1025"/>
    </location>
</feature>
<feature type="turn" evidence="61">
    <location>
        <begin position="1026"/>
        <end position="1029"/>
    </location>
</feature>
<feature type="helix" evidence="61">
    <location>
        <begin position="1032"/>
        <end position="1047"/>
    </location>
</feature>
<feature type="strand" evidence="49">
    <location>
        <begin position="1048"/>
        <end position="1050"/>
    </location>
</feature>
<feature type="strand" evidence="45">
    <location>
        <begin position="1053"/>
        <end position="1055"/>
    </location>
</feature>
<feature type="strand" evidence="46">
    <location>
        <begin position="1056"/>
        <end position="1058"/>
    </location>
</feature>
<accession>P42336</accession>
<accession>Q14CW1</accession>
<accession>Q99762</accession>
<keyword id="KW-0002">3D-structure</keyword>
<keyword id="KW-0037">Angiogenesis</keyword>
<keyword id="KW-0067">ATP-binding</keyword>
<keyword id="KW-0225">Disease variant</keyword>
<keyword id="KW-0418">Kinase</keyword>
<keyword id="KW-0443">Lipid metabolism</keyword>
<keyword id="KW-0547">Nucleotide-binding</keyword>
<keyword id="KW-0581">Phagocytosis</keyword>
<keyword id="KW-1267">Proteomics identification</keyword>
<keyword id="KW-0656">Proto-oncogene</keyword>
<keyword id="KW-1185">Reference proteome</keyword>
<keyword id="KW-0723">Serine/threonine-protein kinase</keyword>
<keyword id="KW-0808">Transferase</keyword>
<organism>
    <name type="scientific">Homo sapiens</name>
    <name type="common">Human</name>
    <dbReference type="NCBI Taxonomy" id="9606"/>
    <lineage>
        <taxon>Eukaryota</taxon>
        <taxon>Metazoa</taxon>
        <taxon>Chordata</taxon>
        <taxon>Craniata</taxon>
        <taxon>Vertebrata</taxon>
        <taxon>Euteleostomi</taxon>
        <taxon>Mammalia</taxon>
        <taxon>Eutheria</taxon>
        <taxon>Euarchontoglires</taxon>
        <taxon>Primates</taxon>
        <taxon>Haplorrhini</taxon>
        <taxon>Catarrhini</taxon>
        <taxon>Hominidae</taxon>
        <taxon>Homo</taxon>
    </lineage>
</organism>
<dbReference type="EC" id="2.7.1.137" evidence="31"/>
<dbReference type="EC" id="2.7.1.153" evidence="8 33"/>
<dbReference type="EC" id="2.7.11.1" evidence="31 33"/>
<dbReference type="EMBL" id="Z29090">
    <property type="protein sequence ID" value="CAA82333.1"/>
    <property type="molecule type" value="mRNA"/>
</dbReference>
<dbReference type="EMBL" id="U79143">
    <property type="protein sequence ID" value="AAB39753.1"/>
    <property type="molecule type" value="mRNA"/>
</dbReference>
<dbReference type="EMBL" id="BC113601">
    <property type="protein sequence ID" value="AAI13602.1"/>
    <property type="molecule type" value="mRNA"/>
</dbReference>
<dbReference type="EMBL" id="BC113603">
    <property type="protein sequence ID" value="AAI13604.1"/>
    <property type="molecule type" value="mRNA"/>
</dbReference>
<dbReference type="CCDS" id="CCDS43171.1"/>
<dbReference type="PIR" id="I38110">
    <property type="entry name" value="I38110"/>
</dbReference>
<dbReference type="RefSeq" id="NP_006209.2">
    <property type="nucleotide sequence ID" value="NM_006218.4"/>
</dbReference>
<dbReference type="RefSeq" id="XP_006713721.1">
    <property type="nucleotide sequence ID" value="XM_006713658.5"/>
</dbReference>
<dbReference type="RefSeq" id="XP_011511196.1">
    <property type="nucleotide sequence ID" value="XM_011512894.2"/>
</dbReference>
<dbReference type="RefSeq" id="XP_054202817.1">
    <property type="nucleotide sequence ID" value="XM_054346842.1"/>
</dbReference>
<dbReference type="RefSeq" id="XP_054202818.1">
    <property type="nucleotide sequence ID" value="XM_054346843.1"/>
</dbReference>
<dbReference type="RefSeq" id="XP_054202819.1">
    <property type="nucleotide sequence ID" value="XM_054346844.1"/>
</dbReference>
<dbReference type="RefSeq" id="XP_054202820.1">
    <property type="nucleotide sequence ID" value="XM_054346845.1"/>
</dbReference>
<dbReference type="RefSeq" id="XP_054202821.1">
    <property type="nucleotide sequence ID" value="XM_054346846.1"/>
</dbReference>
<dbReference type="RefSeq" id="XP_054202822.1">
    <property type="nucleotide sequence ID" value="XM_054346847.1"/>
</dbReference>
<dbReference type="RefSeq" id="XP_054202823.1">
    <property type="nucleotide sequence ID" value="XM_054346848.1"/>
</dbReference>
<dbReference type="PDB" id="2ENQ">
    <property type="method" value="NMR"/>
    <property type="chains" value="A=331-481"/>
</dbReference>
<dbReference type="PDB" id="2RD0">
    <property type="method" value="X-ray"/>
    <property type="resolution" value="3.05 A"/>
    <property type="chains" value="A=1-1068"/>
</dbReference>
<dbReference type="PDB" id="3HHM">
    <property type="method" value="X-ray"/>
    <property type="resolution" value="2.80 A"/>
    <property type="chains" value="A=1-1068"/>
</dbReference>
<dbReference type="PDB" id="3HIZ">
    <property type="method" value="X-ray"/>
    <property type="resolution" value="3.30 A"/>
    <property type="chains" value="A=1-1068"/>
</dbReference>
<dbReference type="PDB" id="3ZIM">
    <property type="method" value="X-ray"/>
    <property type="resolution" value="2.85 A"/>
    <property type="chains" value="A=107-1046"/>
</dbReference>
<dbReference type="PDB" id="4JPS">
    <property type="method" value="X-ray"/>
    <property type="resolution" value="2.20 A"/>
    <property type="chains" value="A=1-1068"/>
</dbReference>
<dbReference type="PDB" id="4L1B">
    <property type="method" value="X-ray"/>
    <property type="resolution" value="2.59 A"/>
    <property type="chains" value="A=1-1068"/>
</dbReference>
<dbReference type="PDB" id="4L23">
    <property type="method" value="X-ray"/>
    <property type="resolution" value="2.50 A"/>
    <property type="chains" value="A=1-1068"/>
</dbReference>
<dbReference type="PDB" id="4L2Y">
    <property type="method" value="X-ray"/>
    <property type="resolution" value="2.80 A"/>
    <property type="chains" value="A=1-1068"/>
</dbReference>
<dbReference type="PDB" id="4OVU">
    <property type="method" value="X-ray"/>
    <property type="resolution" value="2.96 A"/>
    <property type="chains" value="A=1-1068"/>
</dbReference>
<dbReference type="PDB" id="4OVV">
    <property type="method" value="X-ray"/>
    <property type="resolution" value="3.50 A"/>
    <property type="chains" value="A=1-1068"/>
</dbReference>
<dbReference type="PDB" id="4TUU">
    <property type="method" value="X-ray"/>
    <property type="resolution" value="2.64 A"/>
    <property type="chains" value="A=105-1048"/>
</dbReference>
<dbReference type="PDB" id="4TV3">
    <property type="method" value="X-ray"/>
    <property type="resolution" value="2.85 A"/>
    <property type="chains" value="A=105-1048"/>
</dbReference>
<dbReference type="PDB" id="4WAF">
    <property type="method" value="X-ray"/>
    <property type="resolution" value="2.39 A"/>
    <property type="chains" value="A=2-1068"/>
</dbReference>
<dbReference type="PDB" id="4YKN">
    <property type="method" value="X-ray"/>
    <property type="resolution" value="2.90 A"/>
    <property type="chains" value="A=2-1068"/>
</dbReference>
<dbReference type="PDB" id="4ZOP">
    <property type="method" value="X-ray"/>
    <property type="resolution" value="2.62 A"/>
    <property type="chains" value="A=1-1068"/>
</dbReference>
<dbReference type="PDB" id="5DXH">
    <property type="method" value="X-ray"/>
    <property type="resolution" value="3.00 A"/>
    <property type="chains" value="A/D=2-1068"/>
</dbReference>
<dbReference type="PDB" id="5DXT">
    <property type="method" value="X-ray"/>
    <property type="resolution" value="2.25 A"/>
    <property type="chains" value="A=107-1068"/>
</dbReference>
<dbReference type="PDB" id="5FI4">
    <property type="method" value="X-ray"/>
    <property type="resolution" value="2.50 A"/>
    <property type="chains" value="A=1-1068"/>
</dbReference>
<dbReference type="PDB" id="5ITD">
    <property type="method" value="X-ray"/>
    <property type="resolution" value="3.02 A"/>
    <property type="chains" value="A=1-1068"/>
</dbReference>
<dbReference type="PDB" id="5SW8">
    <property type="method" value="X-ray"/>
    <property type="resolution" value="3.30 A"/>
    <property type="chains" value="A=1-1068"/>
</dbReference>
<dbReference type="PDB" id="5SWG">
    <property type="method" value="X-ray"/>
    <property type="resolution" value="3.11 A"/>
    <property type="chains" value="A=1-1068"/>
</dbReference>
<dbReference type="PDB" id="5SWO">
    <property type="method" value="X-ray"/>
    <property type="resolution" value="3.50 A"/>
    <property type="chains" value="A=1-1068"/>
</dbReference>
<dbReference type="PDB" id="5SWP">
    <property type="method" value="X-ray"/>
    <property type="resolution" value="3.41 A"/>
    <property type="chains" value="A=1-1068"/>
</dbReference>
<dbReference type="PDB" id="5SWR">
    <property type="method" value="X-ray"/>
    <property type="resolution" value="3.31 A"/>
    <property type="chains" value="A=1-1068"/>
</dbReference>
<dbReference type="PDB" id="5SWT">
    <property type="method" value="X-ray"/>
    <property type="resolution" value="3.49 A"/>
    <property type="chains" value="A=1-1068"/>
</dbReference>
<dbReference type="PDB" id="5SX8">
    <property type="method" value="X-ray"/>
    <property type="resolution" value="3.47 A"/>
    <property type="chains" value="A=1-1068"/>
</dbReference>
<dbReference type="PDB" id="5SX9">
    <property type="method" value="X-ray"/>
    <property type="resolution" value="3.52 A"/>
    <property type="chains" value="A=1-1068"/>
</dbReference>
<dbReference type="PDB" id="5SXA">
    <property type="method" value="X-ray"/>
    <property type="resolution" value="3.35 A"/>
    <property type="chains" value="A=1-1068"/>
</dbReference>
<dbReference type="PDB" id="5SXB">
    <property type="method" value="X-ray"/>
    <property type="resolution" value="3.30 A"/>
    <property type="chains" value="A=1-1068"/>
</dbReference>
<dbReference type="PDB" id="5SXC">
    <property type="method" value="X-ray"/>
    <property type="resolution" value="3.55 A"/>
    <property type="chains" value="A=1-1068"/>
</dbReference>
<dbReference type="PDB" id="5SXD">
    <property type="method" value="X-ray"/>
    <property type="resolution" value="3.50 A"/>
    <property type="chains" value="A=1-1068"/>
</dbReference>
<dbReference type="PDB" id="5SXE">
    <property type="method" value="X-ray"/>
    <property type="resolution" value="3.51 A"/>
    <property type="chains" value="A=1-1068"/>
</dbReference>
<dbReference type="PDB" id="5SXF">
    <property type="method" value="X-ray"/>
    <property type="resolution" value="3.46 A"/>
    <property type="chains" value="A=1-1068"/>
</dbReference>
<dbReference type="PDB" id="5SXI">
    <property type="method" value="X-ray"/>
    <property type="resolution" value="3.40 A"/>
    <property type="chains" value="A=1-1068"/>
</dbReference>
<dbReference type="PDB" id="5SXJ">
    <property type="method" value="X-ray"/>
    <property type="resolution" value="3.42 A"/>
    <property type="chains" value="A=1-1068"/>
</dbReference>
<dbReference type="PDB" id="5SXK">
    <property type="method" value="X-ray"/>
    <property type="resolution" value="3.55 A"/>
    <property type="chains" value="A=1-1068"/>
</dbReference>
<dbReference type="PDB" id="5UBR">
    <property type="method" value="X-ray"/>
    <property type="resolution" value="2.40 A"/>
    <property type="chains" value="A=107-1050"/>
</dbReference>
<dbReference type="PDB" id="5UK8">
    <property type="method" value="X-ray"/>
    <property type="resolution" value="2.50 A"/>
    <property type="chains" value="A=1-1068"/>
</dbReference>
<dbReference type="PDB" id="5UKJ">
    <property type="method" value="X-ray"/>
    <property type="resolution" value="2.80 A"/>
    <property type="chains" value="A=1-1068"/>
</dbReference>
<dbReference type="PDB" id="5UL1">
    <property type="method" value="X-ray"/>
    <property type="resolution" value="3.00 A"/>
    <property type="chains" value="A=1-1068"/>
</dbReference>
<dbReference type="PDB" id="5XGH">
    <property type="method" value="X-ray"/>
    <property type="resolution" value="2.97 A"/>
    <property type="chains" value="A=8-1055"/>
</dbReference>
<dbReference type="PDB" id="5XGI">
    <property type="method" value="X-ray"/>
    <property type="resolution" value="2.56 A"/>
    <property type="chains" value="A=8-1059"/>
</dbReference>
<dbReference type="PDB" id="5XGJ">
    <property type="method" value="X-ray"/>
    <property type="resolution" value="2.97 A"/>
    <property type="chains" value="A=8-1055"/>
</dbReference>
<dbReference type="PDB" id="6GVF">
    <property type="method" value="X-ray"/>
    <property type="resolution" value="2.50 A"/>
    <property type="chains" value="A=107-1051"/>
</dbReference>
<dbReference type="PDB" id="6GVG">
    <property type="method" value="X-ray"/>
    <property type="resolution" value="3.00 A"/>
    <property type="chains" value="A=107-1068"/>
</dbReference>
<dbReference type="PDB" id="6GVH">
    <property type="method" value="X-ray"/>
    <property type="resolution" value="2.74 A"/>
    <property type="chains" value="A=107-1068"/>
</dbReference>
<dbReference type="PDB" id="6GVI">
    <property type="method" value="X-ray"/>
    <property type="resolution" value="2.90 A"/>
    <property type="chains" value="A=107-1068"/>
</dbReference>
<dbReference type="PDB" id="6NCT">
    <property type="method" value="X-ray"/>
    <property type="resolution" value="3.35 A"/>
    <property type="chains" value="A=1-1068"/>
</dbReference>
<dbReference type="PDB" id="6OAC">
    <property type="method" value="X-ray"/>
    <property type="resolution" value="3.15 A"/>
    <property type="chains" value="A=105-1048"/>
</dbReference>
<dbReference type="PDB" id="6PYS">
    <property type="method" value="X-ray"/>
    <property type="resolution" value="2.19 A"/>
    <property type="chains" value="A=107-1051"/>
</dbReference>
<dbReference type="PDB" id="6VO7">
    <property type="method" value="X-ray"/>
    <property type="resolution" value="2.31 A"/>
    <property type="chains" value="A=157-300"/>
</dbReference>
<dbReference type="PDB" id="7JIU">
    <property type="method" value="X-ray"/>
    <property type="resolution" value="2.12 A"/>
    <property type="chains" value="A=107-1052"/>
</dbReference>
<dbReference type="PDB" id="7K6M">
    <property type="method" value="X-ray"/>
    <property type="resolution" value="2.41 A"/>
    <property type="chains" value="A=105-1048"/>
</dbReference>
<dbReference type="PDB" id="7K6N">
    <property type="method" value="X-ray"/>
    <property type="resolution" value="2.77 A"/>
    <property type="chains" value="A=105-1048"/>
</dbReference>
<dbReference type="PDB" id="7K6O">
    <property type="method" value="X-ray"/>
    <property type="resolution" value="2.74 A"/>
    <property type="chains" value="A=105-1048"/>
</dbReference>
<dbReference type="PDB" id="7K71">
    <property type="method" value="X-ray"/>
    <property type="resolution" value="2.90 A"/>
    <property type="chains" value="A=105-1048"/>
</dbReference>
<dbReference type="PDB" id="7L1B">
    <property type="method" value="X-ray"/>
    <property type="resolution" value="2.04 A"/>
    <property type="chains" value="C=1046-1054"/>
</dbReference>
<dbReference type="PDB" id="7L1C">
    <property type="method" value="X-ray"/>
    <property type="resolution" value="1.96 A"/>
    <property type="chains" value="C=1046-1054"/>
</dbReference>
<dbReference type="PDB" id="7L1D">
    <property type="method" value="X-ray"/>
    <property type="resolution" value="3.11 A"/>
    <property type="chains" value="C=1046-1054"/>
</dbReference>
<dbReference type="PDB" id="7MLK">
    <property type="method" value="X-ray"/>
    <property type="resolution" value="2.91 A"/>
    <property type="chains" value="A=105-1048"/>
</dbReference>
<dbReference type="PDB" id="7MYN">
    <property type="method" value="EM"/>
    <property type="resolution" value="2.79 A"/>
    <property type="chains" value="A=1-1068"/>
</dbReference>
<dbReference type="PDB" id="7MYO">
    <property type="method" value="EM"/>
    <property type="resolution" value="2.92 A"/>
    <property type="chains" value="A=1-1068"/>
</dbReference>
<dbReference type="PDB" id="7PG5">
    <property type="method" value="X-ray"/>
    <property type="resolution" value="2.20 A"/>
    <property type="chains" value="A=1-1068"/>
</dbReference>
<dbReference type="PDB" id="7PG6">
    <property type="method" value="X-ray"/>
    <property type="resolution" value="2.50 A"/>
    <property type="chains" value="A=1-1068"/>
</dbReference>
<dbReference type="PDB" id="7R9V">
    <property type="method" value="X-ray"/>
    <property type="resolution" value="2.69 A"/>
    <property type="chains" value="A=105-1048"/>
</dbReference>
<dbReference type="PDB" id="7R9Y">
    <property type="method" value="X-ray"/>
    <property type="resolution" value="2.85 A"/>
    <property type="chains" value="A=105-1048"/>
</dbReference>
<dbReference type="PDB" id="7RRG">
    <property type="method" value="X-ray"/>
    <property type="resolution" value="2.12 A"/>
    <property type="chains" value="C=1046-1054"/>
</dbReference>
<dbReference type="PDB" id="7TZ7">
    <property type="method" value="X-ray"/>
    <property type="resolution" value="2.41 A"/>
    <property type="chains" value="A=1-1068"/>
</dbReference>
<dbReference type="PDB" id="8AM0">
    <property type="method" value="X-ray"/>
    <property type="resolution" value="2.82 A"/>
    <property type="chains" value="A=1-1068"/>
</dbReference>
<dbReference type="PDB" id="8BFU">
    <property type="method" value="X-ray"/>
    <property type="resolution" value="2.41 A"/>
    <property type="chains" value="A=105-1048"/>
</dbReference>
<dbReference type="PDB" id="8DCP">
    <property type="method" value="EM"/>
    <property type="resolution" value="2.41 A"/>
    <property type="chains" value="A=1-1068"/>
</dbReference>
<dbReference type="PDB" id="8DCX">
    <property type="method" value="EM"/>
    <property type="resolution" value="2.80 A"/>
    <property type="chains" value="A=1-1068"/>
</dbReference>
<dbReference type="PDB" id="8DD4">
    <property type="method" value="EM"/>
    <property type="resolution" value="3.10 A"/>
    <property type="chains" value="A=1-1068"/>
</dbReference>
<dbReference type="PDB" id="8DD8">
    <property type="method" value="EM"/>
    <property type="resolution" value="3.40 A"/>
    <property type="chains" value="A=1-1068"/>
</dbReference>
<dbReference type="PDB" id="8EXL">
    <property type="method" value="X-ray"/>
    <property type="resolution" value="1.99 A"/>
    <property type="chains" value="A=7-1052"/>
</dbReference>
<dbReference type="PDB" id="8EXO">
    <property type="method" value="X-ray"/>
    <property type="resolution" value="2.46 A"/>
    <property type="chains" value="A=7-1052"/>
</dbReference>
<dbReference type="PDB" id="8EXU">
    <property type="method" value="X-ray"/>
    <property type="resolution" value="2.68 A"/>
    <property type="chains" value="A=7-1052"/>
</dbReference>
<dbReference type="PDB" id="8EXV">
    <property type="method" value="X-ray"/>
    <property type="resolution" value="2.48 A"/>
    <property type="chains" value="A=7-1052"/>
</dbReference>
<dbReference type="PDB" id="8GUA">
    <property type="method" value="EM"/>
    <property type="resolution" value="2.77 A"/>
    <property type="chains" value="A=1-1068"/>
</dbReference>
<dbReference type="PDB" id="8GUB">
    <property type="method" value="EM"/>
    <property type="resolution" value="2.73 A"/>
    <property type="chains" value="A=1-1068"/>
</dbReference>
<dbReference type="PDB" id="8GUD">
    <property type="method" value="EM"/>
    <property type="resolution" value="2.62 A"/>
    <property type="chains" value="A=1-1068"/>
</dbReference>
<dbReference type="PDB" id="8ILR">
    <property type="method" value="EM"/>
    <property type="resolution" value="3.05 A"/>
    <property type="chains" value="A=1-1068"/>
</dbReference>
<dbReference type="PDB" id="8ILS">
    <property type="method" value="EM"/>
    <property type="resolution" value="3.10 A"/>
    <property type="chains" value="A=1-1068"/>
</dbReference>
<dbReference type="PDB" id="8ILV">
    <property type="method" value="EM"/>
    <property type="resolution" value="3.19 A"/>
    <property type="chains" value="A=1-1068"/>
</dbReference>
<dbReference type="PDB" id="8OW2">
    <property type="method" value="X-ray"/>
    <property type="resolution" value="2.57 A"/>
    <property type="chains" value="A=105-1048"/>
</dbReference>
<dbReference type="PDB" id="8SBC">
    <property type="method" value="X-ray"/>
    <property type="resolution" value="2.30 A"/>
    <property type="chains" value="A=1-1068"/>
</dbReference>
<dbReference type="PDB" id="8SBJ">
    <property type="method" value="X-ray"/>
    <property type="resolution" value="3.10 A"/>
    <property type="chains" value="A=1-1068"/>
</dbReference>
<dbReference type="PDB" id="8TDU">
    <property type="method" value="X-ray"/>
    <property type="resolution" value="3.11 A"/>
    <property type="chains" value="A/C=1-1068"/>
</dbReference>
<dbReference type="PDB" id="8TGD">
    <property type="method" value="X-ray"/>
    <property type="resolution" value="2.93 A"/>
    <property type="chains" value="A/C=1-1068"/>
</dbReference>
<dbReference type="PDB" id="8TS7">
    <property type="method" value="X-ray"/>
    <property type="resolution" value="2.71 A"/>
    <property type="chains" value="A=2-1053"/>
</dbReference>
<dbReference type="PDB" id="8TS8">
    <property type="method" value="X-ray"/>
    <property type="resolution" value="2.72 A"/>
    <property type="chains" value="A=2-1053"/>
</dbReference>
<dbReference type="PDB" id="8TS9">
    <property type="method" value="X-ray"/>
    <property type="resolution" value="2.83 A"/>
    <property type="chains" value="A=2-1050"/>
</dbReference>
<dbReference type="PDB" id="8TSA">
    <property type="method" value="X-ray"/>
    <property type="resolution" value="2.51 A"/>
    <property type="chains" value="A=2-1050"/>
</dbReference>
<dbReference type="PDB" id="8TSB">
    <property type="method" value="X-ray"/>
    <property type="resolution" value="3.53 A"/>
    <property type="chains" value="A=2-1053"/>
</dbReference>
<dbReference type="PDB" id="8TSC">
    <property type="method" value="X-ray"/>
    <property type="resolution" value="3.62 A"/>
    <property type="chains" value="A=2-1050"/>
</dbReference>
<dbReference type="PDB" id="8TSD">
    <property type="method" value="X-ray"/>
    <property type="resolution" value="2.70 A"/>
    <property type="chains" value="A=2-1053"/>
</dbReference>
<dbReference type="PDB" id="8TU6">
    <property type="method" value="EM"/>
    <property type="resolution" value="3.12 A"/>
    <property type="chains" value="A=2-1068"/>
</dbReference>
<dbReference type="PDB" id="8TWY">
    <property type="method" value="X-ray"/>
    <property type="resolution" value="2.67 A"/>
    <property type="chains" value="A=105-1048"/>
</dbReference>
<dbReference type="PDB" id="8V8H">
    <property type="method" value="X-ray"/>
    <property type="resolution" value="3.58 A"/>
    <property type="chains" value="A/C=1-1068"/>
</dbReference>
<dbReference type="PDB" id="8V8I">
    <property type="method" value="X-ray"/>
    <property type="resolution" value="3.20 A"/>
    <property type="chains" value="A/C=1-1068"/>
</dbReference>
<dbReference type="PDB" id="8V8J">
    <property type="method" value="X-ray"/>
    <property type="resolution" value="3.35 A"/>
    <property type="chains" value="A/C=1-1068"/>
</dbReference>
<dbReference type="PDB" id="8V8U">
    <property type="method" value="X-ray"/>
    <property type="resolution" value="2.93 A"/>
    <property type="chains" value="A/C=1-1068"/>
</dbReference>
<dbReference type="PDB" id="8V8V">
    <property type="method" value="X-ray"/>
    <property type="resolution" value="2.61 A"/>
    <property type="chains" value="A/C=1-1068"/>
</dbReference>
<dbReference type="PDB" id="8VCL">
    <property type="method" value="X-ray"/>
    <property type="resolution" value="2.40 A"/>
    <property type="chains" value="C=1046-1054"/>
</dbReference>
<dbReference type="PDB" id="8W9A">
    <property type="method" value="EM"/>
    <property type="resolution" value="2.70 A"/>
    <property type="chains" value="A=1-1068"/>
</dbReference>
<dbReference type="PDB" id="8W9B">
    <property type="method" value="EM"/>
    <property type="resolution" value="3.00 A"/>
    <property type="chains" value="A=1-1068"/>
</dbReference>
<dbReference type="PDB" id="9ASF">
    <property type="method" value="X-ray"/>
    <property type="resolution" value="1.77 A"/>
    <property type="chains" value="C=1046-1054"/>
</dbReference>
<dbReference type="PDB" id="9ASG">
    <property type="method" value="X-ray"/>
    <property type="resolution" value="2.03 A"/>
    <property type="chains" value="C=1046-1054"/>
</dbReference>
<dbReference type="PDB" id="9B4S">
    <property type="method" value="X-ray"/>
    <property type="resolution" value="3.10 A"/>
    <property type="chains" value="A=105-1068"/>
</dbReference>
<dbReference type="PDB" id="9B4T">
    <property type="method" value="X-ray"/>
    <property type="resolution" value="2.75 A"/>
    <property type="chains" value="A=105-1068"/>
</dbReference>
<dbReference type="PDB" id="9C15">
    <property type="method" value="X-ray"/>
    <property type="resolution" value="2.81 A"/>
    <property type="chains" value="A=105-1068"/>
</dbReference>
<dbReference type="PDB" id="9E8M">
    <property type="method" value="X-ray"/>
    <property type="resolution" value="2.83 A"/>
    <property type="chains" value="A/B=157-300"/>
</dbReference>
<dbReference type="PDBsum" id="2ENQ"/>
<dbReference type="PDBsum" id="2RD0"/>
<dbReference type="PDBsum" id="3HHM"/>
<dbReference type="PDBsum" id="3HIZ"/>
<dbReference type="PDBsum" id="3ZIM"/>
<dbReference type="PDBsum" id="4JPS"/>
<dbReference type="PDBsum" id="4L1B"/>
<dbReference type="PDBsum" id="4L23"/>
<dbReference type="PDBsum" id="4L2Y"/>
<dbReference type="PDBsum" id="4OVU"/>
<dbReference type="PDBsum" id="4OVV"/>
<dbReference type="PDBsum" id="4TUU"/>
<dbReference type="PDBsum" id="4TV3"/>
<dbReference type="PDBsum" id="4WAF"/>
<dbReference type="PDBsum" id="4YKN"/>
<dbReference type="PDBsum" id="4ZOP"/>
<dbReference type="PDBsum" id="5DXH"/>
<dbReference type="PDBsum" id="5DXT"/>
<dbReference type="PDBsum" id="5FI4"/>
<dbReference type="PDBsum" id="5ITD"/>
<dbReference type="PDBsum" id="5SW8"/>
<dbReference type="PDBsum" id="5SWG"/>
<dbReference type="PDBsum" id="5SWO"/>
<dbReference type="PDBsum" id="5SWP"/>
<dbReference type="PDBsum" id="5SWR"/>
<dbReference type="PDBsum" id="5SWT"/>
<dbReference type="PDBsum" id="5SX8"/>
<dbReference type="PDBsum" id="5SX9"/>
<dbReference type="PDBsum" id="5SXA"/>
<dbReference type="PDBsum" id="5SXB"/>
<dbReference type="PDBsum" id="5SXC"/>
<dbReference type="PDBsum" id="5SXD"/>
<dbReference type="PDBsum" id="5SXE"/>
<dbReference type="PDBsum" id="5SXF"/>
<dbReference type="PDBsum" id="5SXI"/>
<dbReference type="PDBsum" id="5SXJ"/>
<dbReference type="PDBsum" id="5SXK"/>
<dbReference type="PDBsum" id="5UBR"/>
<dbReference type="PDBsum" id="5UK8"/>
<dbReference type="PDBsum" id="5UKJ"/>
<dbReference type="PDBsum" id="5UL1"/>
<dbReference type="PDBsum" id="5XGH"/>
<dbReference type="PDBsum" id="5XGI"/>
<dbReference type="PDBsum" id="5XGJ"/>
<dbReference type="PDBsum" id="6GVF"/>
<dbReference type="PDBsum" id="6GVG"/>
<dbReference type="PDBsum" id="6GVH"/>
<dbReference type="PDBsum" id="6GVI"/>
<dbReference type="PDBsum" id="6NCT"/>
<dbReference type="PDBsum" id="6OAC"/>
<dbReference type="PDBsum" id="6PYS"/>
<dbReference type="PDBsum" id="6VO7"/>
<dbReference type="PDBsum" id="7JIU"/>
<dbReference type="PDBsum" id="7K6M"/>
<dbReference type="PDBsum" id="7K6N"/>
<dbReference type="PDBsum" id="7K6O"/>
<dbReference type="PDBsum" id="7K71"/>
<dbReference type="PDBsum" id="7L1B"/>
<dbReference type="PDBsum" id="7L1C"/>
<dbReference type="PDBsum" id="7L1D"/>
<dbReference type="PDBsum" id="7MLK"/>
<dbReference type="PDBsum" id="7MYN"/>
<dbReference type="PDBsum" id="7MYO"/>
<dbReference type="PDBsum" id="7PG5"/>
<dbReference type="PDBsum" id="7PG6"/>
<dbReference type="PDBsum" id="7R9V"/>
<dbReference type="PDBsum" id="7R9Y"/>
<dbReference type="PDBsum" id="7RRG"/>
<dbReference type="PDBsum" id="7TZ7"/>
<dbReference type="PDBsum" id="8AM0"/>
<dbReference type="PDBsum" id="8BFU"/>
<dbReference type="PDBsum" id="8DCP"/>
<dbReference type="PDBsum" id="8DCX"/>
<dbReference type="PDBsum" id="8DD4"/>
<dbReference type="PDBsum" id="8DD8"/>
<dbReference type="PDBsum" id="8EXL"/>
<dbReference type="PDBsum" id="8EXO"/>
<dbReference type="PDBsum" id="8EXU"/>
<dbReference type="PDBsum" id="8EXV"/>
<dbReference type="PDBsum" id="8GUA"/>
<dbReference type="PDBsum" id="8GUB"/>
<dbReference type="PDBsum" id="8GUD"/>
<dbReference type="PDBsum" id="8ILR"/>
<dbReference type="PDBsum" id="8ILS"/>
<dbReference type="PDBsum" id="8ILV"/>
<dbReference type="PDBsum" id="8OW2"/>
<dbReference type="PDBsum" id="8SBC"/>
<dbReference type="PDBsum" id="8SBJ"/>
<dbReference type="PDBsum" id="8TDU"/>
<dbReference type="PDBsum" id="8TGD"/>
<dbReference type="PDBsum" id="8TS7"/>
<dbReference type="PDBsum" id="8TS8"/>
<dbReference type="PDBsum" id="8TS9"/>
<dbReference type="PDBsum" id="8TSA"/>
<dbReference type="PDBsum" id="8TSB"/>
<dbReference type="PDBsum" id="8TSC"/>
<dbReference type="PDBsum" id="8TSD"/>
<dbReference type="PDBsum" id="8TU6"/>
<dbReference type="PDBsum" id="8TWY"/>
<dbReference type="PDBsum" id="8V8H"/>
<dbReference type="PDBsum" id="8V8I"/>
<dbReference type="PDBsum" id="8V8J"/>
<dbReference type="PDBsum" id="8V8U"/>
<dbReference type="PDBsum" id="8V8V"/>
<dbReference type="PDBsum" id="8VCL"/>
<dbReference type="PDBsum" id="8W9A"/>
<dbReference type="PDBsum" id="8W9B"/>
<dbReference type="PDBsum" id="9ASF"/>
<dbReference type="PDBsum" id="9ASG"/>
<dbReference type="PDBsum" id="9B4S"/>
<dbReference type="PDBsum" id="9B4T"/>
<dbReference type="PDBsum" id="9C15"/>
<dbReference type="PDBsum" id="9E8M"/>
<dbReference type="EMDB" id="EMD-24081"/>
<dbReference type="EMDB" id="EMD-24082"/>
<dbReference type="EMDB" id="EMD-27327"/>
<dbReference type="EMDB" id="EMD-27330"/>
<dbReference type="EMDB" id="EMD-27334"/>
<dbReference type="EMDB" id="EMD-27336"/>
<dbReference type="EMDB" id="EMD-34271"/>
<dbReference type="EMDB" id="EMD-34272"/>
<dbReference type="EMDB" id="EMD-34273"/>
<dbReference type="EMDB" id="EMD-35543"/>
<dbReference type="EMDB" id="EMD-35545"/>
<dbReference type="EMDB" id="EMD-35547"/>
<dbReference type="EMDB" id="EMD-37362"/>
<dbReference type="EMDB" id="EMD-37363"/>
<dbReference type="EMDB" id="EMD-41617"/>
<dbReference type="SMR" id="P42336"/>
<dbReference type="BioGRID" id="111308">
    <property type="interactions" value="176"/>
</dbReference>
<dbReference type="ComplexPortal" id="CPX-1917">
    <property type="entry name" value="Phosphatidylinositol 3-kinase complex class IA, p110alpha/p85beta"/>
</dbReference>
<dbReference type="ComplexPortal" id="CPX-1918">
    <property type="entry name" value="Phosphatidylinositol 3-kinase complex class IA, p110alpha/p55gamma"/>
</dbReference>
<dbReference type="ComplexPortal" id="CPX-2384">
    <property type="entry name" value="Phosphatidylinositol 3-kinase complex class IA, p110alpha/p85alpha"/>
</dbReference>
<dbReference type="ComplexPortal" id="CPX-5970">
    <property type="entry name" value="Phosphatidylinositol 3-kinase complex class IA, p110alpha/p55alpha"/>
</dbReference>
<dbReference type="ComplexPortal" id="CPX-5971">
    <property type="entry name" value="Phosphatidylinositol 3-kinase complex class IA, p110alpha/p50alpha"/>
</dbReference>
<dbReference type="CORUM" id="P42336"/>
<dbReference type="DIP" id="DIP-42728N"/>
<dbReference type="FunCoup" id="P42336">
    <property type="interactions" value="3134"/>
</dbReference>
<dbReference type="IntAct" id="P42336">
    <property type="interactions" value="206"/>
</dbReference>
<dbReference type="MINT" id="P42336"/>
<dbReference type="STRING" id="9606.ENSP00000263967"/>
<dbReference type="BindingDB" id="P42336"/>
<dbReference type="ChEMBL" id="CHEMBL4005"/>
<dbReference type="DrugBank" id="DB12015">
    <property type="generic name" value="Alpelisib"/>
</dbReference>
<dbReference type="DrugBank" id="DB00171">
    <property type="generic name" value="ATP"/>
</dbReference>
<dbReference type="DrugBank" id="DB11666">
    <property type="generic name" value="Buparlisib"/>
</dbReference>
<dbReference type="DrugBank" id="DB00201">
    <property type="generic name" value="Caffeine"/>
</dbReference>
<dbReference type="DrugBank" id="DB13051">
    <property type="generic name" value="CH-5132799"/>
</dbReference>
<dbReference type="DrugBank" id="DB12483">
    <property type="generic name" value="Copanlisib"/>
</dbReference>
<dbReference type="DrugBank" id="DB15275">
    <property type="generic name" value="Inavolisib"/>
</dbReference>
<dbReference type="DrugBank" id="DB12167">
    <property type="generic name" value="LY-3023414"/>
</dbReference>
<dbReference type="DrugBank" id="DB11772">
    <property type="generic name" value="Pilaralisib"/>
</dbReference>
<dbReference type="DrugBank" id="DB14935">
    <property type="generic name" value="Serabelisib"/>
</dbReference>
<dbReference type="DrugBank" id="DB12108">
    <property type="generic name" value="Taselisib"/>
</dbReference>
<dbReference type="DrugBank" id="DB08059">
    <property type="generic name" value="Wortmannin"/>
</dbReference>
<dbReference type="DrugBank" id="DB05241">
    <property type="generic name" value="XL765"/>
</dbReference>
<dbReference type="DrugCentral" id="P42336"/>
<dbReference type="GuidetoPHARMACOLOGY" id="2153"/>
<dbReference type="iPTMnet" id="P42336"/>
<dbReference type="MetOSite" id="P42336"/>
<dbReference type="PhosphoSitePlus" id="P42336"/>
<dbReference type="BioMuta" id="PIK3CA"/>
<dbReference type="DMDM" id="126302584"/>
<dbReference type="CPTAC" id="CPTAC-1631"/>
<dbReference type="CPTAC" id="CPTAC-3127"/>
<dbReference type="CPTAC" id="CPTAC-3128"/>
<dbReference type="CPTAC" id="CPTAC-3129"/>
<dbReference type="jPOST" id="P42336"/>
<dbReference type="MassIVE" id="P42336"/>
<dbReference type="PaxDb" id="9606-ENSP00000263967"/>
<dbReference type="PeptideAtlas" id="P42336"/>
<dbReference type="ProteomicsDB" id="55509"/>
<dbReference type="Pumba" id="P42336"/>
<dbReference type="Antibodypedia" id="1374">
    <property type="antibodies" value="746 antibodies from 43 providers"/>
</dbReference>
<dbReference type="CPTC" id="P42336">
    <property type="antibodies" value="1 antibody"/>
</dbReference>
<dbReference type="DNASU" id="5290"/>
<dbReference type="Ensembl" id="ENST00000263967.4">
    <property type="protein sequence ID" value="ENSP00000263967.3"/>
    <property type="gene ID" value="ENSG00000121879.6"/>
</dbReference>
<dbReference type="GeneID" id="5290"/>
<dbReference type="KEGG" id="hsa:5290"/>
<dbReference type="MANE-Select" id="ENST00000263967.4">
    <property type="protein sequence ID" value="ENSP00000263967.3"/>
    <property type="RefSeq nucleotide sequence ID" value="NM_006218.4"/>
    <property type="RefSeq protein sequence ID" value="NP_006209.2"/>
</dbReference>
<dbReference type="UCSC" id="uc003fjk.4">
    <property type="organism name" value="human"/>
</dbReference>
<dbReference type="AGR" id="HGNC:8975"/>
<dbReference type="CTD" id="5290"/>
<dbReference type="DisGeNET" id="5290"/>
<dbReference type="GeneCards" id="PIK3CA"/>
<dbReference type="GeneReviews" id="PIK3CA"/>
<dbReference type="HGNC" id="HGNC:8975">
    <property type="gene designation" value="PIK3CA"/>
</dbReference>
<dbReference type="HPA" id="ENSG00000121879">
    <property type="expression patterns" value="Low tissue specificity"/>
</dbReference>
<dbReference type="MalaCards" id="PIK3CA"/>
<dbReference type="MIM" id="114480">
    <property type="type" value="phenotype"/>
</dbReference>
<dbReference type="MIM" id="114500">
    <property type="type" value="phenotype"/>
</dbReference>
<dbReference type="MIM" id="114550">
    <property type="type" value="phenotype"/>
</dbReference>
<dbReference type="MIM" id="155500">
    <property type="type" value="phenotype"/>
</dbReference>
<dbReference type="MIM" id="167000">
    <property type="type" value="phenotype"/>
</dbReference>
<dbReference type="MIM" id="171834">
    <property type="type" value="gene"/>
</dbReference>
<dbReference type="MIM" id="182000">
    <property type="type" value="phenotype"/>
</dbReference>
<dbReference type="MIM" id="602501">
    <property type="type" value="phenotype"/>
</dbReference>
<dbReference type="MIM" id="606773">
    <property type="type" value="phenotype"/>
</dbReference>
<dbReference type="MIM" id="612918">
    <property type="type" value="phenotype"/>
</dbReference>
<dbReference type="MIM" id="613089">
    <property type="type" value="phenotype"/>
</dbReference>
<dbReference type="MIM" id="615108">
    <property type="type" value="phenotype"/>
</dbReference>
<dbReference type="MIM" id="619538">
    <property type="type" value="phenotype"/>
</dbReference>
<dbReference type="neXtProt" id="NX_P42336"/>
<dbReference type="OpenTargets" id="ENSG00000121879"/>
<dbReference type="Orphanet" id="210159">
    <property type="disease" value="Adult hepatocellular carcinoma"/>
</dbReference>
<dbReference type="Orphanet" id="168984">
    <property type="disease" value="CLAPO syndrome"/>
</dbReference>
<dbReference type="Orphanet" id="140944">
    <property type="disease" value="CLOVES syndrome"/>
</dbReference>
<dbReference type="Orphanet" id="201">
    <property type="disease" value="Cowden syndrome"/>
</dbReference>
<dbReference type="Orphanet" id="221061">
    <property type="disease" value="Familial cerebral cavernous malformation"/>
</dbReference>
<dbReference type="Orphanet" id="276280">
    <property type="disease" value="Hemihyperplasia-multiple lipomatosis syndrome"/>
</dbReference>
<dbReference type="Orphanet" id="99802">
    <property type="disease" value="Hemimegalencephaly"/>
</dbReference>
<dbReference type="Orphanet" id="90308">
    <property type="disease" value="Klippel-Trenaunay syndrome"/>
</dbReference>
<dbReference type="Orphanet" id="144">
    <property type="disease" value="Lynch syndrome"/>
</dbReference>
<dbReference type="Orphanet" id="295239">
    <property type="disease" value="Macrodactyly of fingers, unilateral"/>
</dbReference>
<dbReference type="Orphanet" id="295243">
    <property type="disease" value="Macrodactyly of toes, unilateral"/>
</dbReference>
<dbReference type="Orphanet" id="60040">
    <property type="disease" value="Megalencephaly-capillary malformation-polymicrogyria syndrome"/>
</dbReference>
<dbReference type="Orphanet" id="2495">
    <property type="disease" value="Meningioma"/>
</dbReference>
<dbReference type="Orphanet" id="314662">
    <property type="disease" value="Segmental progressive overgrowth syndrome with fibroadipose hyperplasia"/>
</dbReference>
<dbReference type="PharmGKB" id="PA33308"/>
<dbReference type="VEuPathDB" id="HostDB:ENSG00000121879"/>
<dbReference type="eggNOG" id="KOG0904">
    <property type="taxonomic scope" value="Eukaryota"/>
</dbReference>
<dbReference type="GeneTree" id="ENSGT00940000155531"/>
<dbReference type="HOGENOM" id="CLU_002191_1_1_1"/>
<dbReference type="InParanoid" id="P42336"/>
<dbReference type="OMA" id="RWSEWLN"/>
<dbReference type="OrthoDB" id="67688at2759"/>
<dbReference type="PAN-GO" id="P42336">
    <property type="GO annotations" value="9 GO annotations based on evolutionary models"/>
</dbReference>
<dbReference type="PhylomeDB" id="P42336"/>
<dbReference type="TreeFam" id="TF102031"/>
<dbReference type="BioCyc" id="MetaCyc:HS04527-MONOMER"/>
<dbReference type="BRENDA" id="2.7.1.137">
    <property type="organism ID" value="2681"/>
</dbReference>
<dbReference type="BRENDA" id="2.7.1.153">
    <property type="organism ID" value="2681"/>
</dbReference>
<dbReference type="BRENDA" id="2.7.11.1">
    <property type="organism ID" value="2681"/>
</dbReference>
<dbReference type="PathwayCommons" id="P42336"/>
<dbReference type="Reactome" id="R-HSA-109704">
    <property type="pathway name" value="PI3K Cascade"/>
</dbReference>
<dbReference type="Reactome" id="R-HSA-112399">
    <property type="pathway name" value="IRS-mediated signalling"/>
</dbReference>
<dbReference type="Reactome" id="R-HSA-114604">
    <property type="pathway name" value="GPVI-mediated activation cascade"/>
</dbReference>
<dbReference type="Reactome" id="R-HSA-1236382">
    <property type="pathway name" value="Constitutive Signaling by Ligand-Responsive EGFR Cancer Variants"/>
</dbReference>
<dbReference type="Reactome" id="R-HSA-1250342">
    <property type="pathway name" value="PI3K events in ERBB4 signaling"/>
</dbReference>
<dbReference type="Reactome" id="R-HSA-1257604">
    <property type="pathway name" value="PIP3 activates AKT signaling"/>
</dbReference>
<dbReference type="Reactome" id="R-HSA-1433557">
    <property type="pathway name" value="Signaling by SCF-KIT"/>
</dbReference>
<dbReference type="Reactome" id="R-HSA-1660499">
    <property type="pathway name" value="Synthesis of PIPs at the plasma membrane"/>
</dbReference>
<dbReference type="Reactome" id="R-HSA-180292">
    <property type="pathway name" value="GAB1 signalosome"/>
</dbReference>
<dbReference type="Reactome" id="R-HSA-1839117">
    <property type="pathway name" value="Signaling by cytosolic FGFR1 fusion mutants"/>
</dbReference>
<dbReference type="Reactome" id="R-HSA-186763">
    <property type="pathway name" value="Downstream signal transduction"/>
</dbReference>
<dbReference type="Reactome" id="R-HSA-1963642">
    <property type="pathway name" value="PI3K events in ERBB2 signaling"/>
</dbReference>
<dbReference type="Reactome" id="R-HSA-198203">
    <property type="pathway name" value="PI3K/AKT activation"/>
</dbReference>
<dbReference type="Reactome" id="R-HSA-201556">
    <property type="pathway name" value="Signaling by ALK"/>
</dbReference>
<dbReference type="Reactome" id="R-HSA-202424">
    <property type="pathway name" value="Downstream TCR signaling"/>
</dbReference>
<dbReference type="Reactome" id="R-HSA-2029485">
    <property type="pathway name" value="Role of phospholipids in phagocytosis"/>
</dbReference>
<dbReference type="Reactome" id="R-HSA-210993">
    <property type="pathway name" value="Tie2 Signaling"/>
</dbReference>
<dbReference type="Reactome" id="R-HSA-2219530">
    <property type="pathway name" value="Constitutive Signaling by Aberrant PI3K in Cancer"/>
</dbReference>
<dbReference type="Reactome" id="R-HSA-2424491">
    <property type="pathway name" value="DAP12 signaling"/>
</dbReference>
<dbReference type="Reactome" id="R-HSA-2730905">
    <property type="pathway name" value="Role of LAT2/NTAL/LAB on calcium mobilization"/>
</dbReference>
<dbReference type="Reactome" id="R-HSA-373753">
    <property type="pathway name" value="Nephrin family interactions"/>
</dbReference>
<dbReference type="Reactome" id="R-HSA-389357">
    <property type="pathway name" value="CD28 dependent PI3K/Akt signaling"/>
</dbReference>
<dbReference type="Reactome" id="R-HSA-416476">
    <property type="pathway name" value="G alpha (q) signalling events"/>
</dbReference>
<dbReference type="Reactome" id="R-HSA-4420097">
    <property type="pathway name" value="VEGFA-VEGFR2 Pathway"/>
</dbReference>
<dbReference type="Reactome" id="R-HSA-512988">
    <property type="pathway name" value="Interleukin-3, Interleukin-5 and GM-CSF signaling"/>
</dbReference>
<dbReference type="Reactome" id="R-HSA-5637810">
    <property type="pathway name" value="Constitutive Signaling by EGFRvIII"/>
</dbReference>
<dbReference type="Reactome" id="R-HSA-5654689">
    <property type="pathway name" value="PI-3K cascade:FGFR1"/>
</dbReference>
<dbReference type="Reactome" id="R-HSA-5654695">
    <property type="pathway name" value="PI-3K cascade:FGFR2"/>
</dbReference>
<dbReference type="Reactome" id="R-HSA-5654710">
    <property type="pathway name" value="PI-3K cascade:FGFR3"/>
</dbReference>
<dbReference type="Reactome" id="R-HSA-5654720">
    <property type="pathway name" value="PI-3K cascade:FGFR4"/>
</dbReference>
<dbReference type="Reactome" id="R-HSA-5655253">
    <property type="pathway name" value="Signaling by FGFR2 in disease"/>
</dbReference>
<dbReference type="Reactome" id="R-HSA-5655291">
    <property type="pathway name" value="Signaling by FGFR4 in disease"/>
</dbReference>
<dbReference type="Reactome" id="R-HSA-5655302">
    <property type="pathway name" value="Signaling by FGFR1 in disease"/>
</dbReference>
<dbReference type="Reactome" id="R-HSA-5655332">
    <property type="pathway name" value="Signaling by FGFR3 in disease"/>
</dbReference>
<dbReference type="Reactome" id="R-HSA-5673001">
    <property type="pathway name" value="RAF/MAP kinase cascade"/>
</dbReference>
<dbReference type="Reactome" id="R-HSA-6811558">
    <property type="pathway name" value="PI5P, PP2A and IER3 Regulate PI3K/AKT Signaling"/>
</dbReference>
<dbReference type="Reactome" id="R-HSA-8851907">
    <property type="pathway name" value="MET activates PI3K/AKT signaling"/>
</dbReference>
<dbReference type="Reactome" id="R-HSA-8853659">
    <property type="pathway name" value="RET signaling"/>
</dbReference>
<dbReference type="Reactome" id="R-HSA-9009391">
    <property type="pathway name" value="Extra-nuclear estrogen signaling"/>
</dbReference>
<dbReference type="Reactome" id="R-HSA-9013149">
    <property type="pathway name" value="RAC1 GTPase cycle"/>
</dbReference>
<dbReference type="Reactome" id="R-HSA-9013404">
    <property type="pathway name" value="RAC2 GTPase cycle"/>
</dbReference>
<dbReference type="Reactome" id="R-HSA-9027276">
    <property type="pathway name" value="Erythropoietin activates Phosphoinositide-3-kinase (PI3K)"/>
</dbReference>
<dbReference type="Reactome" id="R-HSA-9028335">
    <property type="pathway name" value="Activated NTRK2 signals through PI3K"/>
</dbReference>
<dbReference type="Reactome" id="R-HSA-912526">
    <property type="pathway name" value="Interleukin receptor SHC signaling"/>
</dbReference>
<dbReference type="Reactome" id="R-HSA-912631">
    <property type="pathway name" value="Regulation of signaling by CBL"/>
</dbReference>
<dbReference type="Reactome" id="R-HSA-9603381">
    <property type="pathway name" value="Activated NTRK3 signals through PI3K"/>
</dbReference>
<dbReference type="Reactome" id="R-HSA-9607240">
    <property type="pathway name" value="FLT3 Signaling"/>
</dbReference>
<dbReference type="Reactome" id="R-HSA-9664565">
    <property type="pathway name" value="Signaling by ERBB2 KD Mutants"/>
</dbReference>
<dbReference type="Reactome" id="R-HSA-9665348">
    <property type="pathway name" value="Signaling by ERBB2 ECD mutants"/>
</dbReference>
<dbReference type="Reactome" id="R-HSA-9670439">
    <property type="pathway name" value="Signaling by phosphorylated juxtamembrane, extracellular and kinase domain KIT mutants"/>
</dbReference>
<dbReference type="Reactome" id="R-HSA-9673767">
    <property type="pathway name" value="Signaling by PDGFRA transmembrane, juxtamembrane and kinase domain mutants"/>
</dbReference>
<dbReference type="Reactome" id="R-HSA-9673770">
    <property type="pathway name" value="Signaling by PDGFRA extracellular domain mutants"/>
</dbReference>
<dbReference type="Reactome" id="R-HSA-9680350">
    <property type="pathway name" value="Signaling by CSF1 (M-CSF) in myeloid cells"/>
</dbReference>
<dbReference type="Reactome" id="R-HSA-9703465">
    <property type="pathway name" value="Signaling by FLT3 fusion proteins"/>
</dbReference>
<dbReference type="Reactome" id="R-HSA-9703648">
    <property type="pathway name" value="Signaling by FLT3 ITD and TKD mutants"/>
</dbReference>
<dbReference type="Reactome" id="R-HSA-9725370">
    <property type="pathway name" value="Signaling by ALK fusions and activated point mutants"/>
</dbReference>
<dbReference type="Reactome" id="R-HSA-9842640">
    <property type="pathway name" value="Signaling by LTK in cancer"/>
</dbReference>
<dbReference type="Reactome" id="R-HSA-9842663">
    <property type="pathway name" value="Signaling by LTK"/>
</dbReference>
<dbReference type="Reactome" id="R-HSA-9856530">
    <property type="pathway name" value="High laminar flow shear stress activates signaling by PIEZO1 and PECAM1:CDH5:KDR in endothelial cells"/>
</dbReference>
<dbReference type="Reactome" id="R-HSA-9927354">
    <property type="pathway name" value="Co-stimulation by ICOS"/>
</dbReference>
<dbReference type="SABIO-RK" id="P42336"/>
<dbReference type="SignaLink" id="P42336"/>
<dbReference type="SIGNOR" id="P42336"/>
<dbReference type="UniPathway" id="UPA00220"/>
<dbReference type="BioGRID-ORCS" id="5290">
    <property type="hits" value="275 hits in 1174 CRISPR screens"/>
</dbReference>
<dbReference type="CD-CODE" id="8C2F96ED">
    <property type="entry name" value="Centrosome"/>
</dbReference>
<dbReference type="ChiTaRS" id="PIK3CA">
    <property type="organism name" value="human"/>
</dbReference>
<dbReference type="EvolutionaryTrace" id="P42336"/>
<dbReference type="GeneWiki" id="P110%CE%B1"/>
<dbReference type="GenomeRNAi" id="5290"/>
<dbReference type="Pharos" id="P42336">
    <property type="development level" value="Tclin"/>
</dbReference>
<dbReference type="PRO" id="PR:P42336"/>
<dbReference type="Proteomes" id="UP000005640">
    <property type="component" value="Chromosome 3"/>
</dbReference>
<dbReference type="RNAct" id="P42336">
    <property type="molecule type" value="protein"/>
</dbReference>
<dbReference type="Bgee" id="ENSG00000121879">
    <property type="expression patterns" value="Expressed in calcaneal tendon and 201 other cell types or tissues"/>
</dbReference>
<dbReference type="ExpressionAtlas" id="P42336">
    <property type="expression patterns" value="baseline and differential"/>
</dbReference>
<dbReference type="GO" id="GO:0005737">
    <property type="term" value="C:cytoplasm"/>
    <property type="evidence" value="ECO:0000318"/>
    <property type="project" value="GO_Central"/>
</dbReference>
<dbReference type="GO" id="GO:0005829">
    <property type="term" value="C:cytosol"/>
    <property type="evidence" value="ECO:0000304"/>
    <property type="project" value="Reactome"/>
</dbReference>
<dbReference type="GO" id="GO:0014704">
    <property type="term" value="C:intercalated disc"/>
    <property type="evidence" value="ECO:0000250"/>
    <property type="project" value="BHF-UCL"/>
</dbReference>
<dbReference type="GO" id="GO:0030027">
    <property type="term" value="C:lamellipodium"/>
    <property type="evidence" value="ECO:0007669"/>
    <property type="project" value="Ensembl"/>
</dbReference>
<dbReference type="GO" id="GO:0048471">
    <property type="term" value="C:perinuclear region of cytoplasm"/>
    <property type="evidence" value="ECO:0000250"/>
    <property type="project" value="BHF-UCL"/>
</dbReference>
<dbReference type="GO" id="GO:0005942">
    <property type="term" value="C:phosphatidylinositol 3-kinase complex"/>
    <property type="evidence" value="ECO:0000250"/>
    <property type="project" value="BHF-UCL"/>
</dbReference>
<dbReference type="GO" id="GO:0005943">
    <property type="term" value="C:phosphatidylinositol 3-kinase complex, class IA"/>
    <property type="evidence" value="ECO:0000314"/>
    <property type="project" value="UniProtKB"/>
</dbReference>
<dbReference type="GO" id="GO:0005944">
    <property type="term" value="C:phosphatidylinositol 3-kinase complex, class IB"/>
    <property type="evidence" value="ECO:0000318"/>
    <property type="project" value="GO_Central"/>
</dbReference>
<dbReference type="GO" id="GO:0005886">
    <property type="term" value="C:plasma membrane"/>
    <property type="evidence" value="ECO:0000318"/>
    <property type="project" value="GO_Central"/>
</dbReference>
<dbReference type="GO" id="GO:0016303">
    <property type="term" value="F:1-phosphatidylinositol-3-kinase activity"/>
    <property type="evidence" value="ECO:0000314"/>
    <property type="project" value="UniProtKB"/>
</dbReference>
<dbReference type="GO" id="GO:0046934">
    <property type="term" value="F:1-phosphatidylinositol-4,5-bisphosphate 3-kinase activity"/>
    <property type="evidence" value="ECO:0000314"/>
    <property type="project" value="UniProt"/>
</dbReference>
<dbReference type="GO" id="GO:0035005">
    <property type="term" value="F:1-phosphatidylinositol-4-phosphate 3-kinase activity"/>
    <property type="evidence" value="ECO:0000318"/>
    <property type="project" value="GO_Central"/>
</dbReference>
<dbReference type="GO" id="GO:0005524">
    <property type="term" value="F:ATP binding"/>
    <property type="evidence" value="ECO:0007669"/>
    <property type="project" value="UniProtKB-KW"/>
</dbReference>
<dbReference type="GO" id="GO:0043560">
    <property type="term" value="F:insulin receptor substrate binding"/>
    <property type="evidence" value="ECO:0007669"/>
    <property type="project" value="Ensembl"/>
</dbReference>
<dbReference type="GO" id="GO:0030295">
    <property type="term" value="F:protein kinase activator activity"/>
    <property type="evidence" value="ECO:0007669"/>
    <property type="project" value="Ensembl"/>
</dbReference>
<dbReference type="GO" id="GO:0106310">
    <property type="term" value="F:protein serine kinase activity"/>
    <property type="evidence" value="ECO:0007669"/>
    <property type="project" value="RHEA"/>
</dbReference>
<dbReference type="GO" id="GO:0004674">
    <property type="term" value="F:protein serine/threonine kinase activity"/>
    <property type="evidence" value="ECO:0007669"/>
    <property type="project" value="UniProtKB-KW"/>
</dbReference>
<dbReference type="GO" id="GO:0030036">
    <property type="term" value="P:actin cytoskeleton organization"/>
    <property type="evidence" value="ECO:0000250"/>
    <property type="project" value="BHF-UCL"/>
</dbReference>
<dbReference type="GO" id="GO:0060612">
    <property type="term" value="P:adipose tissue development"/>
    <property type="evidence" value="ECO:0007669"/>
    <property type="project" value="Ensembl"/>
</dbReference>
<dbReference type="GO" id="GO:0001525">
    <property type="term" value="P:angiogenesis"/>
    <property type="evidence" value="ECO:0007669"/>
    <property type="project" value="UniProtKB-KW"/>
</dbReference>
<dbReference type="GO" id="GO:0043276">
    <property type="term" value="P:anoikis"/>
    <property type="evidence" value="ECO:0000303"/>
    <property type="project" value="ParkinsonsUK-UCL"/>
</dbReference>
<dbReference type="GO" id="GO:0141068">
    <property type="term" value="P:autosome genomic imprinting"/>
    <property type="evidence" value="ECO:0007669"/>
    <property type="project" value="Ensembl"/>
</dbReference>
<dbReference type="GO" id="GO:0086003">
    <property type="term" value="P:cardiac muscle cell contraction"/>
    <property type="evidence" value="ECO:0000250"/>
    <property type="project" value="BHF-UCL"/>
</dbReference>
<dbReference type="GO" id="GO:0060048">
    <property type="term" value="P:cardiac muscle contraction"/>
    <property type="evidence" value="ECO:0000304"/>
    <property type="project" value="UniProtKB"/>
</dbReference>
<dbReference type="GO" id="GO:0016477">
    <property type="term" value="P:cell migration"/>
    <property type="evidence" value="ECO:0000318"/>
    <property type="project" value="GO_Central"/>
</dbReference>
<dbReference type="GO" id="GO:0071333">
    <property type="term" value="P:cellular response to glucose stimulus"/>
    <property type="evidence" value="ECO:0007669"/>
    <property type="project" value="Ensembl"/>
</dbReference>
<dbReference type="GO" id="GO:0071464">
    <property type="term" value="P:cellular response to hydrostatic pressure"/>
    <property type="evidence" value="ECO:0000250"/>
    <property type="project" value="BHF-UCL"/>
</dbReference>
<dbReference type="GO" id="GO:0032869">
    <property type="term" value="P:cellular response to insulin stimulus"/>
    <property type="evidence" value="ECO:0000314"/>
    <property type="project" value="UniProt"/>
</dbReference>
<dbReference type="GO" id="GO:0043542">
    <property type="term" value="P:endothelial cell migration"/>
    <property type="evidence" value="ECO:0000304"/>
    <property type="project" value="UniProtKB"/>
</dbReference>
<dbReference type="GO" id="GO:0097009">
    <property type="term" value="P:energy homeostasis"/>
    <property type="evidence" value="ECO:0007669"/>
    <property type="project" value="Ensembl"/>
</dbReference>
<dbReference type="GO" id="GO:0007173">
    <property type="term" value="P:epidermal growth factor receptor signaling pathway"/>
    <property type="evidence" value="ECO:0000304"/>
    <property type="project" value="Reactome"/>
</dbReference>
<dbReference type="GO" id="GO:0006006">
    <property type="term" value="P:glucose metabolic process"/>
    <property type="evidence" value="ECO:0007669"/>
    <property type="project" value="Ensembl"/>
</dbReference>
<dbReference type="GO" id="GO:0008286">
    <property type="term" value="P:insulin receptor signaling pathway"/>
    <property type="evidence" value="ECO:0000304"/>
    <property type="project" value="UniProtKB"/>
</dbReference>
<dbReference type="GO" id="GO:0048009">
    <property type="term" value="P:insulin-like growth factor receptor signaling pathway"/>
    <property type="evidence" value="ECO:0007669"/>
    <property type="project" value="Ensembl"/>
</dbReference>
<dbReference type="GO" id="GO:0001889">
    <property type="term" value="P:liver development"/>
    <property type="evidence" value="ECO:0007669"/>
    <property type="project" value="Ensembl"/>
</dbReference>
<dbReference type="GO" id="GO:0030835">
    <property type="term" value="P:negative regulation of actin filament depolymerization"/>
    <property type="evidence" value="ECO:0000250"/>
    <property type="project" value="BHF-UCL"/>
</dbReference>
<dbReference type="GO" id="GO:2000811">
    <property type="term" value="P:negative regulation of anoikis"/>
    <property type="evidence" value="ECO:0000315"/>
    <property type="project" value="UniProtKB"/>
</dbReference>
<dbReference type="GO" id="GO:2000270">
    <property type="term" value="P:negative regulation of fibroblast apoptotic process"/>
    <property type="evidence" value="ECO:0007669"/>
    <property type="project" value="Ensembl"/>
</dbReference>
<dbReference type="GO" id="GO:0010629">
    <property type="term" value="P:negative regulation of gene expression"/>
    <property type="evidence" value="ECO:0007669"/>
    <property type="project" value="Ensembl"/>
</dbReference>
<dbReference type="GO" id="GO:0016242">
    <property type="term" value="P:negative regulation of macroautophagy"/>
    <property type="evidence" value="ECO:0000303"/>
    <property type="project" value="ParkinsonsUK-UCL"/>
</dbReference>
<dbReference type="GO" id="GO:0043524">
    <property type="term" value="P:negative regulation of neuron apoptotic process"/>
    <property type="evidence" value="ECO:0007669"/>
    <property type="project" value="Ensembl"/>
</dbReference>
<dbReference type="GO" id="GO:0006909">
    <property type="term" value="P:phagocytosis"/>
    <property type="evidence" value="ECO:0007669"/>
    <property type="project" value="UniProtKB-KW"/>
</dbReference>
<dbReference type="GO" id="GO:0043491">
    <property type="term" value="P:phosphatidylinositol 3-kinase/protein kinase B signal transduction"/>
    <property type="evidence" value="ECO:0000316"/>
    <property type="project" value="BHF-UCL"/>
</dbReference>
<dbReference type="GO" id="GO:0046854">
    <property type="term" value="P:phosphatidylinositol phosphate biosynthetic process"/>
    <property type="evidence" value="ECO:0000250"/>
    <property type="project" value="BHF-UCL"/>
</dbReference>
<dbReference type="GO" id="GO:0036092">
    <property type="term" value="P:phosphatidylinositol-3-phosphate biosynthetic process"/>
    <property type="evidence" value="ECO:0000318"/>
    <property type="project" value="GO_Central"/>
</dbReference>
<dbReference type="GO" id="GO:0048015">
    <property type="term" value="P:phosphatidylinositol-mediated signaling"/>
    <property type="evidence" value="ECO:0000318"/>
    <property type="project" value="GO_Central"/>
</dbReference>
<dbReference type="GO" id="GO:0030168">
    <property type="term" value="P:platelet activation"/>
    <property type="evidence" value="ECO:0000304"/>
    <property type="project" value="UniProtKB"/>
</dbReference>
<dbReference type="GO" id="GO:0010592">
    <property type="term" value="P:positive regulation of lamellipodium assembly"/>
    <property type="evidence" value="ECO:0000250"/>
    <property type="project" value="BHF-UCL"/>
</dbReference>
<dbReference type="GO" id="GO:0051897">
    <property type="term" value="P:positive regulation of phosphatidylinositol 3-kinase/protein kinase B signal transduction"/>
    <property type="evidence" value="ECO:0000316"/>
    <property type="project" value="BHF-UCL"/>
</dbReference>
<dbReference type="GO" id="GO:1905477">
    <property type="term" value="P:positive regulation of protein localization to membrane"/>
    <property type="evidence" value="ECO:0000314"/>
    <property type="project" value="UniProt"/>
</dbReference>
<dbReference type="GO" id="GO:0048661">
    <property type="term" value="P:positive regulation of smooth muscle cell proliferation"/>
    <property type="evidence" value="ECO:0007669"/>
    <property type="project" value="Ensembl"/>
</dbReference>
<dbReference type="GO" id="GO:0032008">
    <property type="term" value="P:positive regulation of TOR signaling"/>
    <property type="evidence" value="ECO:0000303"/>
    <property type="project" value="ParkinsonsUK-UCL"/>
</dbReference>
<dbReference type="GO" id="GO:0110053">
    <property type="term" value="P:regulation of actin filament organization"/>
    <property type="evidence" value="ECO:0000250"/>
    <property type="project" value="BHF-UCL"/>
</dbReference>
<dbReference type="GO" id="GO:0043457">
    <property type="term" value="P:regulation of cellular respiration"/>
    <property type="evidence" value="ECO:0007669"/>
    <property type="project" value="Ensembl"/>
</dbReference>
<dbReference type="GO" id="GO:0040014">
    <property type="term" value="P:regulation of multicellular organism growth"/>
    <property type="evidence" value="ECO:0007669"/>
    <property type="project" value="Ensembl"/>
</dbReference>
<dbReference type="GO" id="GO:0055119">
    <property type="term" value="P:relaxation of cardiac muscle"/>
    <property type="evidence" value="ECO:0000250"/>
    <property type="project" value="BHF-UCL"/>
</dbReference>
<dbReference type="GO" id="GO:0014823">
    <property type="term" value="P:response to activity"/>
    <property type="evidence" value="ECO:0007669"/>
    <property type="project" value="Ensembl"/>
</dbReference>
<dbReference type="GO" id="GO:1903544">
    <property type="term" value="P:response to butyrate"/>
    <property type="evidence" value="ECO:0007669"/>
    <property type="project" value="Ensembl"/>
</dbReference>
<dbReference type="GO" id="GO:0071548">
    <property type="term" value="P:response to dexamethasone"/>
    <property type="evidence" value="ECO:0007669"/>
    <property type="project" value="Ensembl"/>
</dbReference>
<dbReference type="GO" id="GO:0043201">
    <property type="term" value="P:response to L-leucine"/>
    <property type="evidence" value="ECO:0007669"/>
    <property type="project" value="Ensembl"/>
</dbReference>
<dbReference type="GO" id="GO:0014870">
    <property type="term" value="P:response to muscle inactivity"/>
    <property type="evidence" value="ECO:0007669"/>
    <property type="project" value="Ensembl"/>
</dbReference>
<dbReference type="GO" id="GO:0035994">
    <property type="term" value="P:response to muscle stretch"/>
    <property type="evidence" value="ECO:0000250"/>
    <property type="project" value="BHF-UCL"/>
</dbReference>
<dbReference type="GO" id="GO:0050852">
    <property type="term" value="P:T cell receptor signaling pathway"/>
    <property type="evidence" value="ECO:0000304"/>
    <property type="project" value="Reactome"/>
</dbReference>
<dbReference type="GO" id="GO:0038084">
    <property type="term" value="P:vascular endothelial growth factor signaling pathway"/>
    <property type="evidence" value="ECO:0000316"/>
    <property type="project" value="BHF-UCL"/>
</dbReference>
<dbReference type="GO" id="GO:0001944">
    <property type="term" value="P:vasculature development"/>
    <property type="evidence" value="ECO:0000304"/>
    <property type="project" value="UniProtKB"/>
</dbReference>
<dbReference type="CDD" id="cd08398">
    <property type="entry name" value="C2_PI3K_class_I_alpha"/>
    <property type="match status" value="1"/>
</dbReference>
<dbReference type="CDD" id="cd00872">
    <property type="entry name" value="PI3Ka_I"/>
    <property type="match status" value="1"/>
</dbReference>
<dbReference type="CDD" id="cd05175">
    <property type="entry name" value="PI3Kc_IA_alpha"/>
    <property type="match status" value="1"/>
</dbReference>
<dbReference type="FunFam" id="1.10.1070.11:FF:000006">
    <property type="entry name" value="Phosphatidylinositol 4,5-bisphosphate 3-kinase catalytic subunit"/>
    <property type="match status" value="1"/>
</dbReference>
<dbReference type="FunFam" id="1.25.40.70:FF:000001">
    <property type="entry name" value="Phosphatidylinositol 4,5-bisphosphate 3-kinase catalytic subunit"/>
    <property type="match status" value="1"/>
</dbReference>
<dbReference type="FunFam" id="2.60.40.150:FF:000041">
    <property type="entry name" value="Phosphatidylinositol 4,5-bisphosphate 3-kinase catalytic subunit"/>
    <property type="match status" value="1"/>
</dbReference>
<dbReference type="FunFam" id="3.10.20.90:FF:000055">
    <property type="entry name" value="Phosphatidylinositol 4,5-bisphosphate 3-kinase catalytic subunit"/>
    <property type="match status" value="1"/>
</dbReference>
<dbReference type="FunFam" id="3.10.20.90:FF:000074">
    <property type="entry name" value="Phosphatidylinositol 4,5-bisphosphate 3-kinase catalytic subunit"/>
    <property type="match status" value="1"/>
</dbReference>
<dbReference type="FunFam" id="3.30.1010.10:FF:000007">
    <property type="entry name" value="Phosphatidylinositol 4,5-bisphosphate 3-kinase catalytic subunit"/>
    <property type="match status" value="1"/>
</dbReference>
<dbReference type="Gene3D" id="2.60.40.150">
    <property type="entry name" value="C2 domain"/>
    <property type="match status" value="1"/>
</dbReference>
<dbReference type="Gene3D" id="1.10.1070.11">
    <property type="entry name" value="Phosphatidylinositol 3-/4-kinase, catalytic domain"/>
    <property type="match status" value="1"/>
</dbReference>
<dbReference type="Gene3D" id="3.10.20.90">
    <property type="entry name" value="Phosphatidylinositol 3-kinase Catalytic Subunit, Chain A, domain 1"/>
    <property type="match status" value="2"/>
</dbReference>
<dbReference type="Gene3D" id="3.30.1010.10">
    <property type="entry name" value="Phosphatidylinositol 3-kinase Catalytic Subunit, Chain A, domain 4"/>
    <property type="match status" value="1"/>
</dbReference>
<dbReference type="Gene3D" id="1.25.40.70">
    <property type="entry name" value="Phosphatidylinositol 3-kinase, accessory domain (PIK)"/>
    <property type="match status" value="1"/>
</dbReference>
<dbReference type="InterPro" id="IPR016024">
    <property type="entry name" value="ARM-type_fold"/>
</dbReference>
<dbReference type="InterPro" id="IPR035892">
    <property type="entry name" value="C2_domain_sf"/>
</dbReference>
<dbReference type="InterPro" id="IPR011009">
    <property type="entry name" value="Kinase-like_dom_sf"/>
</dbReference>
<dbReference type="InterPro" id="IPR000403">
    <property type="entry name" value="PI3/4_kinase_cat_dom"/>
</dbReference>
<dbReference type="InterPro" id="IPR036940">
    <property type="entry name" value="PI3/4_kinase_cat_sf"/>
</dbReference>
<dbReference type="InterPro" id="IPR018936">
    <property type="entry name" value="PI3/4_kinase_CS"/>
</dbReference>
<dbReference type="InterPro" id="IPR002420">
    <property type="entry name" value="PI3K-type_C2_dom"/>
</dbReference>
<dbReference type="InterPro" id="IPR003113">
    <property type="entry name" value="PI3K_ABD"/>
</dbReference>
<dbReference type="InterPro" id="IPR001263">
    <property type="entry name" value="PI3K_accessory_dom"/>
</dbReference>
<dbReference type="InterPro" id="IPR042236">
    <property type="entry name" value="PI3K_accessory_sf"/>
</dbReference>
<dbReference type="InterPro" id="IPR000341">
    <property type="entry name" value="PI3K_Ras-bd_dom"/>
</dbReference>
<dbReference type="InterPro" id="IPR037704">
    <property type="entry name" value="PI3Kalpha_dom"/>
</dbReference>
<dbReference type="InterPro" id="IPR015433">
    <property type="entry name" value="PI_Kinase"/>
</dbReference>
<dbReference type="InterPro" id="IPR029071">
    <property type="entry name" value="Ubiquitin-like_domsf"/>
</dbReference>
<dbReference type="PANTHER" id="PTHR10048:SF107">
    <property type="entry name" value="PHOSPHATIDYLINOSITOL 4,5-BISPHOSPHATE 3-KINASE CATALYTIC SUBUNIT ALPHA ISOFORM"/>
    <property type="match status" value="1"/>
</dbReference>
<dbReference type="PANTHER" id="PTHR10048">
    <property type="entry name" value="PHOSPHATIDYLINOSITOL KINASE"/>
    <property type="match status" value="1"/>
</dbReference>
<dbReference type="Pfam" id="PF00454">
    <property type="entry name" value="PI3_PI4_kinase"/>
    <property type="match status" value="1"/>
</dbReference>
<dbReference type="Pfam" id="PF00792">
    <property type="entry name" value="PI3K_C2"/>
    <property type="match status" value="1"/>
</dbReference>
<dbReference type="Pfam" id="PF02192">
    <property type="entry name" value="PI3K_p85B"/>
    <property type="match status" value="1"/>
</dbReference>
<dbReference type="Pfam" id="PF00794">
    <property type="entry name" value="PI3K_rbd"/>
    <property type="match status" value="1"/>
</dbReference>
<dbReference type="Pfam" id="PF00613">
    <property type="entry name" value="PI3Ka"/>
    <property type="match status" value="1"/>
</dbReference>
<dbReference type="SMART" id="SM00142">
    <property type="entry name" value="PI3K_C2"/>
    <property type="match status" value="1"/>
</dbReference>
<dbReference type="SMART" id="SM00143">
    <property type="entry name" value="PI3K_p85B"/>
    <property type="match status" value="1"/>
</dbReference>
<dbReference type="SMART" id="SM00144">
    <property type="entry name" value="PI3K_rbd"/>
    <property type="match status" value="1"/>
</dbReference>
<dbReference type="SMART" id="SM00145">
    <property type="entry name" value="PI3Ka"/>
    <property type="match status" value="1"/>
</dbReference>
<dbReference type="SMART" id="SM00146">
    <property type="entry name" value="PI3Kc"/>
    <property type="match status" value="1"/>
</dbReference>
<dbReference type="SUPFAM" id="SSF48371">
    <property type="entry name" value="ARM repeat"/>
    <property type="match status" value="1"/>
</dbReference>
<dbReference type="SUPFAM" id="SSF49562">
    <property type="entry name" value="C2 domain (Calcium/lipid-binding domain, CaLB)"/>
    <property type="match status" value="1"/>
</dbReference>
<dbReference type="SUPFAM" id="SSF56112">
    <property type="entry name" value="Protein kinase-like (PK-like)"/>
    <property type="match status" value="1"/>
</dbReference>
<dbReference type="SUPFAM" id="SSF54236">
    <property type="entry name" value="Ubiquitin-like"/>
    <property type="match status" value="1"/>
</dbReference>
<dbReference type="PROSITE" id="PS51547">
    <property type="entry name" value="C2_PI3K"/>
    <property type="match status" value="1"/>
</dbReference>
<dbReference type="PROSITE" id="PS00915">
    <property type="entry name" value="PI3_4_KINASE_1"/>
    <property type="match status" value="1"/>
</dbReference>
<dbReference type="PROSITE" id="PS00916">
    <property type="entry name" value="PI3_4_KINASE_2"/>
    <property type="match status" value="1"/>
</dbReference>
<dbReference type="PROSITE" id="PS50290">
    <property type="entry name" value="PI3_4_KINASE_3"/>
    <property type="match status" value="1"/>
</dbReference>
<dbReference type="PROSITE" id="PS51544">
    <property type="entry name" value="PI3K_ABD"/>
    <property type="match status" value="1"/>
</dbReference>
<dbReference type="PROSITE" id="PS51546">
    <property type="entry name" value="PI3K_RBD"/>
    <property type="match status" value="1"/>
</dbReference>
<dbReference type="PROSITE" id="PS51545">
    <property type="entry name" value="PIK_HELICAL"/>
    <property type="match status" value="1"/>
</dbReference>
<gene>
    <name type="primary">PIK3CA</name>
</gene>